<evidence type="ECO:0000250" key="1">
    <source>
        <dbReference type="UniProtKB" id="Q9DCP9"/>
    </source>
</evidence>
<evidence type="ECO:0000256" key="2">
    <source>
        <dbReference type="SAM" id="MobiDB-lite"/>
    </source>
</evidence>
<evidence type="ECO:0000269" key="3">
    <source>
    </source>
</evidence>
<evidence type="ECO:0000269" key="4">
    <source>
    </source>
</evidence>
<evidence type="ECO:0000269" key="5">
    <source>
    </source>
</evidence>
<evidence type="ECO:0000269" key="6">
    <source>
    </source>
</evidence>
<evidence type="ECO:0000269" key="7">
    <source>
    </source>
</evidence>
<evidence type="ECO:0000269" key="8">
    <source>
    </source>
</evidence>
<evidence type="ECO:0000269" key="9">
    <source>
    </source>
</evidence>
<evidence type="ECO:0000269" key="10">
    <source>
    </source>
</evidence>
<evidence type="ECO:0000269" key="11">
    <source>
    </source>
</evidence>
<evidence type="ECO:0000269" key="12">
    <source>
    </source>
</evidence>
<evidence type="ECO:0000303" key="13">
    <source>
    </source>
</evidence>
<evidence type="ECO:0000303" key="14">
    <source>
    </source>
</evidence>
<evidence type="ECO:0000303" key="15">
    <source ref="2"/>
</evidence>
<evidence type="ECO:0000303" key="16">
    <source ref="4"/>
</evidence>
<evidence type="ECO:0000305" key="17"/>
<evidence type="ECO:0000312" key="18">
    <source>
        <dbReference type="HGNC" id="HGNC:2684"/>
    </source>
</evidence>
<comment type="function">
    <text evidence="1 6 12">In unstressed cells, promotes SIAH1-mediated polyubiquitination and degradation of the serine/threonine-protein kinase HIPK2, probably by acting as a loading factor that potentiates complex formation between HIPK2 and ubiquitin ligase SIAH1 (PubMed:33591310). In response to DNA damage, localizes to the nucleus following phosphorylation by HIPK2 and modulates the expression of a subset of TP53/p53 target genes by binding to TP53 at target gene promoters (PubMed:33591310). This limits the expression of a number of cell death-mediating TP53 target genes, reducing DNA damage-induced cell death (PubMed:33591310). Enhances the binding of transcription factor TCF7L2/TCF4, a Wnt signaling pathway effector, to the promoters of target genes (By similarity). Plays a role in stress granule formation (PubMed:17984221).</text>
</comment>
<comment type="subunit">
    <text evidence="1 3 4 6 7 9 10 11 12">Interacts with SOX6 (By similarity). Interacts with DAZ1 and DAZL (PubMed:10857750). Interacts with IL17RB (PubMed:22070932). May interact with FAM168B (PubMed:22771904). Interacts with INCA1 (PubMed:21750715). Interacts with EIF4G1 and EIF4G2 (PubMed:17984221). Interacts (via PPAY motif) with NEDD4 (via WW domains) (PubMed:11342538). Interacts with transcription factor TCF7L2/TCF4; the interaction results in localization of DAZAP2 to the nucleus (PubMed:19304756). Interacts with transcription factors TCF7 and TCF7L1 (PubMed:19304756). Interacts with transcription factor LEF1 (PubMed:19304756). Interacts with serine/threonine-protein kinase HIPK2; the interaction results in phosphorylation of DAZAP2 which causes localization of DAZAP2 to the nucleus, reduces interaction of DAZAP2 with HIPK2 and prevents DAZAP2-dependent degradation of HIPK2 (PubMed:33591310). Interacts with ubiquitin ligase SIAH1; the interaction is decreased following phosphorylation of DAZAP2 by HIPK2 (PubMed:33591310). Interacts with TP53 at TP53 target gene promoters; the interaction is triggered by DNA damage (PubMed:33591310).</text>
</comment>
<comment type="interaction">
    <interactant intactId="EBI-724310">
        <id>Q15038</id>
    </interactant>
    <interactant intactId="EBI-12007918">
        <id>O00154-4</id>
        <label>ACOT7</label>
    </interactant>
    <organismsDiffer>false</organismsDiffer>
    <experiments>3</experiments>
</comment>
<comment type="interaction">
    <interactant intactId="EBI-724310">
        <id>Q15038</id>
    </interactant>
    <interactant intactId="EBI-12826295">
        <id>P19801</id>
        <label>AOC1</label>
    </interactant>
    <organismsDiffer>false</organismsDiffer>
    <experiments>3</experiments>
</comment>
<comment type="interaction">
    <interactant intactId="EBI-724310">
        <id>Q15038</id>
    </interactant>
    <interactant intactId="EBI-948603">
        <id>Q03989</id>
        <label>ARID5A</label>
    </interactant>
    <organismsDiffer>false</organismsDiffer>
    <experiments>8</experiments>
</comment>
<comment type="interaction">
    <interactant intactId="EBI-724310">
        <id>Q15038</id>
    </interactant>
    <interactant intactId="EBI-930964">
        <id>P54253</id>
        <label>ATXN1</label>
    </interactant>
    <organismsDiffer>false</organismsDiffer>
    <experiments>2</experiments>
</comment>
<comment type="interaction">
    <interactant intactId="EBI-724310">
        <id>Q15038</id>
    </interactant>
    <interactant intactId="EBI-747185">
        <id>O95817</id>
        <label>BAG3</label>
    </interactant>
    <organismsDiffer>false</organismsDiffer>
    <experiments>9</experiments>
</comment>
<comment type="interaction">
    <interactant intactId="EBI-724310">
        <id>Q15038</id>
    </interactant>
    <interactant intactId="EBI-742695">
        <id>Q8N1L9</id>
        <label>BATF2</label>
    </interactant>
    <organismsDiffer>false</organismsDiffer>
    <experiments>3</experiments>
</comment>
<comment type="interaction">
    <interactant intactId="EBI-724310">
        <id>Q15038</id>
    </interactant>
    <interactant intactId="EBI-711810">
        <id>O14503</id>
        <label>BHLHE40</label>
    </interactant>
    <organismsDiffer>false</organismsDiffer>
    <experiments>5</experiments>
</comment>
<comment type="interaction">
    <interactant intactId="EBI-724310">
        <id>Q15038</id>
    </interactant>
    <interactant intactId="EBI-946029">
        <id>Q6P1W5</id>
        <label>C1orf94</label>
    </interactant>
    <organismsDiffer>false</organismsDiffer>
    <experiments>7</experiments>
</comment>
<comment type="interaction">
    <interactant intactId="EBI-724310">
        <id>Q15038</id>
    </interactant>
    <interactant intactId="EBI-739580">
        <id>Q13137</id>
        <label>CALCOCO2</label>
    </interactant>
    <organismsDiffer>false</organismsDiffer>
    <experiments>4</experiments>
</comment>
<comment type="interaction">
    <interactant intactId="EBI-724310">
        <id>Q15038</id>
    </interactant>
    <interactant intactId="EBI-1383687">
        <id>Q9UQM7</id>
        <label>CAMK2A</label>
    </interactant>
    <organismsDiffer>false</organismsDiffer>
    <experiments>3</experiments>
</comment>
<comment type="interaction">
    <interactant intactId="EBI-724310">
        <id>Q15038</id>
    </interactant>
    <interactant intactId="EBI-6149008">
        <id>O75808</id>
        <label>CAPN15</label>
    </interactant>
    <organismsDiffer>false</organismsDiffer>
    <experiments>3</experiments>
</comment>
<comment type="interaction">
    <interactant intactId="EBI-724310">
        <id>Q15038</id>
    </interactant>
    <interactant intactId="EBI-12139335">
        <id>Q8N6W0</id>
        <label>CELF5</label>
    </interactant>
    <organismsDiffer>false</organismsDiffer>
    <experiments>6</experiments>
</comment>
<comment type="interaction">
    <interactant intactId="EBI-724310">
        <id>Q15038</id>
    </interactant>
    <interactant intactId="EBI-12832044">
        <id>Q96J87-2</id>
        <label>CELF6</label>
    </interactant>
    <organismsDiffer>false</organismsDiffer>
    <experiments>3</experiments>
</comment>
<comment type="interaction">
    <interactant intactId="EBI-724310">
        <id>Q15038</id>
    </interactant>
    <interactant intactId="EBI-2654750">
        <id>Q96G28</id>
        <label>CFAP36</label>
    </interactant>
    <organismsDiffer>false</organismsDiffer>
    <experiments>3</experiments>
</comment>
<comment type="interaction">
    <interactant intactId="EBI-724310">
        <id>Q15038</id>
    </interactant>
    <interactant intactId="EBI-7875264">
        <id>O75553</id>
        <label>DAB1</label>
    </interactant>
    <organismsDiffer>false</organismsDiffer>
    <experiments>3</experiments>
</comment>
<comment type="interaction">
    <interactant intactId="EBI-724310">
        <id>Q15038</id>
    </interactant>
    <interactant intactId="EBI-997955">
        <id>Q9NQZ3</id>
        <label>DAZ1</label>
    </interactant>
    <organismsDiffer>false</organismsDiffer>
    <experiments>3</experiments>
</comment>
<comment type="interaction">
    <interactant intactId="EBI-724310">
        <id>Q15038</id>
    </interactant>
    <interactant intactId="EBI-724310">
        <id>Q15038</id>
        <label>DAZAP2</label>
    </interactant>
    <organismsDiffer>false</organismsDiffer>
    <experiments>7</experiments>
</comment>
<comment type="interaction">
    <interactant intactId="EBI-724310">
        <id>Q15038</id>
    </interactant>
    <interactant intactId="EBI-740086">
        <id>Q96GG9</id>
        <label>DCUN1D1</label>
    </interactant>
    <organismsDiffer>false</organismsDiffer>
    <experiments>9</experiments>
</comment>
<comment type="interaction">
    <interactant intactId="EBI-724310">
        <id>Q15038</id>
    </interactant>
    <interactant intactId="EBI-2806959">
        <id>Q6ICB0</id>
        <label>DESI1</label>
    </interactant>
    <organismsDiffer>false</organismsDiffer>
    <experiments>5</experiments>
</comment>
<comment type="interaction">
    <interactant intactId="EBI-724310">
        <id>Q15038</id>
    </interactant>
    <interactant intactId="EBI-740376">
        <id>Q86UW9</id>
        <label>DTX2</label>
    </interactant>
    <organismsDiffer>false</organismsDiffer>
    <experiments>3</experiments>
</comment>
<comment type="interaction">
    <interactant intactId="EBI-724310">
        <id>Q15038</id>
    </interactant>
    <interactant intactId="EBI-713198">
        <id>Q9Y6I3</id>
        <label>EPN1</label>
    </interactant>
    <organismsDiffer>false</organismsDiffer>
    <experiments>3</experiments>
</comment>
<comment type="interaction">
    <interactant intactId="EBI-724310">
        <id>Q15038</id>
    </interactant>
    <interactant intactId="EBI-12026538">
        <id>Q9Y6I3-3</id>
        <label>EPN1</label>
    </interactant>
    <organismsDiffer>false</organismsDiffer>
    <experiments>3</experiments>
</comment>
<comment type="interaction">
    <interactant intactId="EBI-724310">
        <id>Q15038</id>
    </interactant>
    <interactant intactId="EBI-12135243">
        <id>O95208-2</id>
        <label>EPN2</label>
    </interactant>
    <organismsDiffer>false</organismsDiffer>
    <experiments>5</experiments>
</comment>
<comment type="interaction">
    <interactant intactId="EBI-724310">
        <id>Q15038</id>
    </interactant>
    <interactant intactId="EBI-12866582">
        <id>I6L9I8</id>
        <label>EPN3</label>
    </interactant>
    <organismsDiffer>false</organismsDiffer>
    <experiments>5</experiments>
</comment>
<comment type="interaction">
    <interactant intactId="EBI-724310">
        <id>Q15038</id>
    </interactant>
    <interactant intactId="EBI-10213520">
        <id>Q6NXG1</id>
        <label>ESRP1</label>
    </interactant>
    <organismsDiffer>false</organismsDiffer>
    <experiments>3</experiments>
</comment>
<comment type="interaction">
    <interactant intactId="EBI-724310">
        <id>Q15038</id>
    </interactant>
    <interactant intactId="EBI-750745">
        <id>Q8N9H8</id>
        <label>EXD3</label>
    </interactant>
    <organismsDiffer>false</organismsDiffer>
    <experiments>3</experiments>
</comment>
<comment type="interaction">
    <interactant intactId="EBI-724310">
        <id>Q15038</id>
    </interactant>
    <interactant intactId="EBI-7957930">
        <id>Q92567</id>
        <label>FAM168A</label>
    </interactant>
    <organismsDiffer>false</organismsDiffer>
    <experiments>3</experiments>
</comment>
<comment type="interaction">
    <interactant intactId="EBI-724310">
        <id>Q15038</id>
    </interactant>
    <interactant intactId="EBI-11978259">
        <id>Q92567-2</id>
        <label>FAM168A</label>
    </interactant>
    <organismsDiffer>false</organismsDiffer>
    <experiments>5</experiments>
</comment>
<comment type="interaction">
    <interactant intactId="EBI-724310">
        <id>Q15038</id>
    </interactant>
    <interactant intactId="EBI-1384254">
        <id>Q86UY5</id>
        <label>FAM83A</label>
    </interactant>
    <organismsDiffer>false</organismsDiffer>
    <experiments>3</experiments>
</comment>
<comment type="interaction">
    <interactant intactId="EBI-724310">
        <id>Q15038</id>
    </interactant>
    <interactant intactId="EBI-11320806">
        <id>Q9NU39</id>
        <label>FOXD4L1</label>
    </interactant>
    <organismsDiffer>false</organismsDiffer>
    <experiments>3</experiments>
</comment>
<comment type="interaction">
    <interactant intactId="EBI-724310">
        <id>Q15038</id>
    </interactant>
    <interactant intactId="EBI-1759806">
        <id>O75593</id>
        <label>FOXH1</label>
    </interactant>
    <organismsDiffer>false</organismsDiffer>
    <experiments>5</experiments>
</comment>
<comment type="interaction">
    <interactant intactId="EBI-724310">
        <id>Q15038</id>
    </interactant>
    <interactant intactId="EBI-12075758">
        <id>Q9NZ52-2</id>
        <label>GGA3</label>
    </interactant>
    <organismsDiffer>false</organismsDiffer>
    <experiments>3</experiments>
</comment>
<comment type="interaction">
    <interactant intactId="EBI-724310">
        <id>Q15038</id>
    </interactant>
    <interactant intactId="EBI-713355">
        <id>Q13227</id>
        <label>GPS2</label>
    </interactant>
    <organismsDiffer>false</organismsDiffer>
    <experiments>3</experiments>
</comment>
<comment type="interaction">
    <interactant intactId="EBI-724310">
        <id>Q15038</id>
    </interactant>
    <interactant intactId="EBI-10329202">
        <id>Q9Y5R4</id>
        <label>HEMK1</label>
    </interactant>
    <organismsDiffer>false</organismsDiffer>
    <experiments>3</experiments>
</comment>
<comment type="interaction">
    <interactant intactId="EBI-724310">
        <id>Q15038</id>
    </interactant>
    <interactant intactId="EBI-7231130">
        <id>Q9Y5J3</id>
        <label>HEY1</label>
    </interactant>
    <organismsDiffer>false</organismsDiffer>
    <experiments>3</experiments>
</comment>
<comment type="interaction">
    <interactant intactId="EBI-724310">
        <id>Q15038</id>
    </interactant>
    <interactant intactId="EBI-740220">
        <id>O14964</id>
        <label>HGS</label>
    </interactant>
    <organismsDiffer>false</organismsDiffer>
    <experiments>9</experiments>
</comment>
<comment type="interaction">
    <interactant intactId="EBI-724310">
        <id>Q15038</id>
    </interactant>
    <interactant intactId="EBI-473886">
        <id>O00291</id>
        <label>HIP1</label>
    </interactant>
    <organismsDiffer>false</organismsDiffer>
    <experiments>4</experiments>
</comment>
<comment type="interaction">
    <interactant intactId="EBI-724310">
        <id>Q15038</id>
    </interactant>
    <interactant intactId="EBI-3957665">
        <id>Q96LI6</id>
        <label>HSFY2</label>
    </interactant>
    <organismsDiffer>false</organismsDiffer>
    <experiments>3</experiments>
</comment>
<comment type="interaction">
    <interactant intactId="EBI-724310">
        <id>Q15038</id>
    </interactant>
    <interactant intactId="EBI-466029">
        <id>P42858</id>
        <label>HTT</label>
    </interactant>
    <organismsDiffer>false</organismsDiffer>
    <experiments>3</experiments>
</comment>
<comment type="interaction">
    <interactant intactId="EBI-724310">
        <id>Q15038</id>
    </interactant>
    <interactant intactId="EBI-2867349">
        <id>Q9NRM6</id>
        <label>IL17RB</label>
    </interactant>
    <organismsDiffer>false</organismsDiffer>
    <experiments>3</experiments>
</comment>
<comment type="interaction">
    <interactant intactId="EBI-724310">
        <id>Q15038</id>
    </interactant>
    <interactant intactId="EBI-6509505">
        <id>Q0VD86</id>
        <label>INCA1</label>
    </interactant>
    <organismsDiffer>false</organismsDiffer>
    <experiments>2</experiments>
</comment>
<comment type="interaction">
    <interactant intactId="EBI-724310">
        <id>Q15038</id>
    </interactant>
    <interactant intactId="EBI-6426064">
        <id>Q2M1V0</id>
        <label>ISX</label>
    </interactant>
    <organismsDiffer>false</organismsDiffer>
    <experiments>3</experiments>
</comment>
<comment type="interaction">
    <interactant intactId="EBI-724310">
        <id>Q15038</id>
    </interactant>
    <interactant intactId="EBI-739890">
        <id>Q9P2K6</id>
        <label>KLHL42</label>
    </interactant>
    <organismsDiffer>false</organismsDiffer>
    <experiments>3</experiments>
</comment>
<comment type="interaction">
    <interactant intactId="EBI-724310">
        <id>Q15038</id>
    </interactant>
    <interactant intactId="EBI-11992140">
        <id>Q3LI76</id>
        <label>KRTAP15-1</label>
    </interactant>
    <organismsDiffer>false</organismsDiffer>
    <experiments>5</experiments>
</comment>
<comment type="interaction">
    <interactant intactId="EBI-724310">
        <id>Q15038</id>
    </interactant>
    <interactant intactId="EBI-12811111">
        <id>Q8IUB9</id>
        <label>KRTAP19-1</label>
    </interactant>
    <organismsDiffer>false</organismsDiffer>
    <experiments>3</experiments>
</comment>
<comment type="interaction">
    <interactant intactId="EBI-724310">
        <id>Q15038</id>
    </interactant>
    <interactant intactId="EBI-12020132">
        <id>Q7Z4W3</id>
        <label>KRTAP19-3</label>
    </interactant>
    <organismsDiffer>false</organismsDiffer>
    <experiments>6</experiments>
</comment>
<comment type="interaction">
    <interactant intactId="EBI-724310">
        <id>Q15038</id>
    </interactant>
    <interactant intactId="EBI-1048945">
        <id>Q3LI72</id>
        <label>KRTAP19-5</label>
    </interactant>
    <organismsDiffer>false</organismsDiffer>
    <experiments>11</experiments>
</comment>
<comment type="interaction">
    <interactant intactId="EBI-724310">
        <id>Q15038</id>
    </interactant>
    <interactant intactId="EBI-10241353">
        <id>Q3SYF9</id>
        <label>KRTAP19-7</label>
    </interactant>
    <organismsDiffer>false</organismsDiffer>
    <experiments>3</experiments>
</comment>
<comment type="interaction">
    <interactant intactId="EBI-724310">
        <id>Q15038</id>
    </interactant>
    <interactant intactId="EBI-3957672">
        <id>Q6PEX3</id>
        <label>KRTAP26-1</label>
    </interactant>
    <organismsDiffer>false</organismsDiffer>
    <experiments>3</experiments>
</comment>
<comment type="interaction">
    <interactant intactId="EBI-724310">
        <id>Q15038</id>
    </interactant>
    <interactant intactId="EBI-12111050">
        <id>Q3LI64</id>
        <label>KRTAP6-1</label>
    </interactant>
    <organismsDiffer>false</organismsDiffer>
    <experiments>8</experiments>
</comment>
<comment type="interaction">
    <interactant intactId="EBI-724310">
        <id>Q15038</id>
    </interactant>
    <interactant intactId="EBI-11962084">
        <id>Q3LI66</id>
        <label>KRTAP6-2</label>
    </interactant>
    <organismsDiffer>false</organismsDiffer>
    <experiments>3</experiments>
</comment>
<comment type="interaction">
    <interactant intactId="EBI-724310">
        <id>Q15038</id>
    </interactant>
    <interactant intactId="EBI-10261141">
        <id>Q8IUC2</id>
        <label>KRTAP8-1</label>
    </interactant>
    <organismsDiffer>false</organismsDiffer>
    <experiments>6</experiments>
</comment>
<comment type="interaction">
    <interactant intactId="EBI-724310">
        <id>Q15038</id>
    </interactant>
    <interactant intactId="EBI-9088686">
        <id>Q14847-2</id>
        <label>LASP1</label>
    </interactant>
    <organismsDiffer>false</organismsDiffer>
    <experiments>5</experiments>
</comment>
<comment type="interaction">
    <interactant intactId="EBI-724310">
        <id>Q15038</id>
    </interactant>
    <interactant intactId="EBI-12130578">
        <id>O00182-2</id>
        <label>LGALS9</label>
    </interactant>
    <organismsDiffer>false</organismsDiffer>
    <experiments>3</experiments>
</comment>
<comment type="interaction">
    <interactant intactId="EBI-724310">
        <id>Q15038</id>
    </interactant>
    <interactant intactId="EBI-725647">
        <id>Q99732</id>
        <label>LITAF</label>
    </interactant>
    <organismsDiffer>false</organismsDiffer>
    <experiments>5</experiments>
</comment>
<comment type="interaction">
    <interactant intactId="EBI-724310">
        <id>Q15038</id>
    </interactant>
    <interactant intactId="EBI-716006">
        <id>Q9Y5V3</id>
        <label>MAGED1</label>
    </interactant>
    <organismsDiffer>false</organismsDiffer>
    <experiments>4</experiments>
</comment>
<comment type="interaction">
    <interactant intactId="EBI-724310">
        <id>Q15038</id>
    </interactant>
    <interactant intactId="EBI-741424">
        <id>Q8NDC0</id>
        <label>MAPK1IP1L</label>
    </interactant>
    <organismsDiffer>false</organismsDiffer>
    <experiments>3</experiments>
</comment>
<comment type="interaction">
    <interactant intactId="EBI-724310">
        <id>Q15038</id>
    </interactant>
    <interactant intactId="EBI-12382151">
        <id>Q8N5J2-3</id>
        <label>MINDY1</label>
    </interactant>
    <organismsDiffer>false</organismsDiffer>
    <experiments>3</experiments>
</comment>
<comment type="interaction">
    <interactant intactId="EBI-724310">
        <id>Q15038</id>
    </interactant>
    <interactant intactId="EBI-724928">
        <id>Q9H8M7</id>
        <label>MINDY3</label>
    </interactant>
    <organismsDiffer>false</organismsDiffer>
    <experiments>3</experiments>
</comment>
<comment type="interaction">
    <interactant intactId="EBI-724310">
        <id>Q15038</id>
    </interactant>
    <interactant intactId="EBI-11980301">
        <id>Q8N3F0</id>
        <label>MTURN</label>
    </interactant>
    <organismsDiffer>false</organismsDiffer>
    <experiments>5</experiments>
</comment>
<comment type="interaction">
    <interactant intactId="EBI-724310">
        <id>Q15038</id>
    </interactant>
    <interactant intactId="EBI-12260130">
        <id>Q96EZ4</id>
        <label>MYEOV</label>
    </interactant>
    <organismsDiffer>false</organismsDiffer>
    <experiments>3</experiments>
</comment>
<comment type="interaction">
    <interactant intactId="EBI-724310">
        <id>Q15038</id>
    </interactant>
    <interactant intactId="EBI-5662487">
        <id>Q8TDC0</id>
        <label>MYOZ3</label>
    </interactant>
    <organismsDiffer>false</organismsDiffer>
    <experiments>3</experiments>
</comment>
<comment type="interaction">
    <interactant intactId="EBI-724310">
        <id>Q15038</id>
    </interactant>
    <interactant intactId="EBI-2515597">
        <id>Q96HR8</id>
        <label>NAF1</label>
    </interactant>
    <organismsDiffer>false</organismsDiffer>
    <experiments>3</experiments>
</comment>
<comment type="interaction">
    <interactant intactId="EBI-724310">
        <id>Q15038</id>
    </interactant>
    <interactant intactId="EBI-717962">
        <id>Q96PU5</id>
        <label>NEDD4L</label>
    </interactant>
    <organismsDiffer>false</organismsDiffer>
    <experiments>3</experiments>
</comment>
<comment type="interaction">
    <interactant intactId="EBI-724310">
        <id>Q15038</id>
    </interactant>
    <interactant intactId="EBI-6955201">
        <id>Q96PU5-2</id>
        <label>NEDD4L</label>
    </interactant>
    <organismsDiffer>false</organismsDiffer>
    <experiments>3</experiments>
</comment>
<comment type="interaction">
    <interactant intactId="EBI-724310">
        <id>Q15038</id>
    </interactant>
    <interactant intactId="EBI-748974">
        <id>Q96CV9</id>
        <label>OPTN</label>
    </interactant>
    <organismsDiffer>false</organismsDiffer>
    <experiments>6</experiments>
</comment>
<comment type="interaction">
    <interactant intactId="EBI-724310">
        <id>Q15038</id>
    </interactant>
    <interactant intactId="EBI-746259">
        <id>Q96DC9</id>
        <label>OTUB2</label>
    </interactant>
    <organismsDiffer>false</organismsDiffer>
    <experiments>5</experiments>
</comment>
<comment type="interaction">
    <interactant intactId="EBI-724310">
        <id>Q15038</id>
    </interactant>
    <interactant intactId="EBI-527784">
        <id>Q6GQQ9</id>
        <label>OTUD7B</label>
    </interactant>
    <organismsDiffer>false</organismsDiffer>
    <experiments>3</experiments>
</comment>
<comment type="interaction">
    <interactant intactId="EBI-724310">
        <id>Q15038</id>
    </interactant>
    <interactant intactId="EBI-750730">
        <id>Q96BN8</id>
        <label>OTULIN</label>
    </interactant>
    <organismsDiffer>false</organismsDiffer>
    <experiments>6</experiments>
</comment>
<comment type="interaction">
    <interactant intactId="EBI-724310">
        <id>Q15038</id>
    </interactant>
    <interactant intactId="EBI-11022007">
        <id>Q9HBE1-4</id>
        <label>PATZ1</label>
    </interactant>
    <organismsDiffer>false</organismsDiffer>
    <experiments>3</experiments>
</comment>
<comment type="interaction">
    <interactant intactId="EBI-724310">
        <id>Q15038</id>
    </interactant>
    <interactant intactId="EBI-6423298">
        <id>Q8N165</id>
        <label>PDIK1L</label>
    </interactant>
    <organismsDiffer>false</organismsDiffer>
    <experiments>3</experiments>
</comment>
<comment type="interaction">
    <interactant intactId="EBI-724310">
        <id>Q15038</id>
    </interactant>
    <interactant intactId="EBI-724639">
        <id>Q9UBV8</id>
        <label>PEF1</label>
    </interactant>
    <organismsDiffer>false</organismsDiffer>
    <experiments>6</experiments>
</comment>
<comment type="interaction">
    <interactant intactId="EBI-724310">
        <id>Q15038</id>
    </interactant>
    <interactant intactId="EBI-12138495">
        <id>Q99697-2</id>
        <label>PITX2</label>
    </interactant>
    <organismsDiffer>false</organismsDiffer>
    <experiments>3</experiments>
</comment>
<comment type="interaction">
    <interactant intactId="EBI-724310">
        <id>Q15038</id>
    </interactant>
    <interactant intactId="EBI-373552">
        <id>Q96CS7</id>
        <label>PLEKHB2</label>
    </interactant>
    <organismsDiffer>false</organismsDiffer>
    <experiments>11</experiments>
</comment>
<comment type="interaction">
    <interactant intactId="EBI-724310">
        <id>Q15038</id>
    </interactant>
    <interactant intactId="EBI-742388">
        <id>Q9H8W4</id>
        <label>PLEKHF2</label>
    </interactant>
    <organismsDiffer>false</organismsDiffer>
    <experiments>3</experiments>
</comment>
<comment type="interaction">
    <interactant intactId="EBI-724310">
        <id>Q15038</id>
    </interactant>
    <interactant intactId="EBI-740019">
        <id>O15162</id>
        <label>PLSCR1</label>
    </interactant>
    <organismsDiffer>false</organismsDiffer>
    <experiments>4</experiments>
</comment>
<comment type="interaction">
    <interactant intactId="EBI-724310">
        <id>Q15038</id>
    </interactant>
    <interactant intactId="EBI-769257">
        <id>Q9NRQ2</id>
        <label>PLSCR4</label>
    </interactant>
    <organismsDiffer>false</organismsDiffer>
    <experiments>3</experiments>
</comment>
<comment type="interaction">
    <interactant intactId="EBI-724310">
        <id>Q15038</id>
    </interactant>
    <interactant intactId="EBI-1389308">
        <id>Q7Z3K3</id>
        <label>POGZ</label>
    </interactant>
    <organismsDiffer>false</organismsDiffer>
    <experiments>8</experiments>
</comment>
<comment type="interaction">
    <interactant intactId="EBI-724310">
        <id>Q15038</id>
    </interactant>
    <interactant intactId="EBI-741774">
        <id>Q9UNA4</id>
        <label>POLI</label>
    </interactant>
    <organismsDiffer>false</organismsDiffer>
    <experiments>3</experiments>
</comment>
<comment type="interaction">
    <interactant intactId="EBI-724310">
        <id>Q15038</id>
    </interactant>
    <interactant intactId="EBI-9027467">
        <id>O75360</id>
        <label>PROP1</label>
    </interactant>
    <organismsDiffer>false</organismsDiffer>
    <experiments>3</experiments>
</comment>
<comment type="interaction">
    <interactant intactId="EBI-724310">
        <id>Q15038</id>
    </interactant>
    <interactant intactId="EBI-740924">
        <id>Q9NZ81</id>
        <label>PRR13</label>
    </interactant>
    <organismsDiffer>false</organismsDiffer>
    <experiments>3</experiments>
</comment>
<comment type="interaction">
    <interactant intactId="EBI-724310">
        <id>Q15038</id>
    </interactant>
    <interactant intactId="EBI-10172814">
        <id>P86479</id>
        <label>PRR20C</label>
    </interactant>
    <organismsDiffer>false</organismsDiffer>
    <experiments>4</experiments>
</comment>
<comment type="interaction">
    <interactant intactId="EBI-724310">
        <id>Q15038</id>
    </interactant>
    <interactant intactId="EBI-12754095">
        <id>P86480</id>
        <label>PRR20D</label>
    </interactant>
    <organismsDiffer>false</organismsDiffer>
    <experiments>5</experiments>
</comment>
<comment type="interaction">
    <interactant intactId="EBI-724310">
        <id>Q15038</id>
    </interactant>
    <interactant intactId="EBI-11959565">
        <id>Q9NV39</id>
        <label>PRR34</label>
    </interactant>
    <organismsDiffer>false</organismsDiffer>
    <experiments>3</experiments>
</comment>
<comment type="interaction">
    <interactant intactId="EBI-724310">
        <id>Q15038</id>
    </interactant>
    <interactant intactId="EBI-913954">
        <id>Q9UJ41</id>
        <label>RABGEF1</label>
    </interactant>
    <organismsDiffer>false</organismsDiffer>
    <experiments>3</experiments>
</comment>
<comment type="interaction">
    <interactant intactId="EBI-724310">
        <id>Q15038</id>
    </interactant>
    <interactant intactId="EBI-14093916">
        <id>Q9UJ41-4</id>
        <label>RABGEF1</label>
    </interactant>
    <organismsDiffer>false</organismsDiffer>
    <experiments>6</experiments>
</comment>
<comment type="interaction">
    <interactant intactId="EBI-724310">
        <id>Q15038</id>
    </interactant>
    <interactant intactId="EBI-2339393">
        <id>Q9NS91</id>
        <label>RAD18</label>
    </interactant>
    <organismsDiffer>false</organismsDiffer>
    <experiments>3</experiments>
</comment>
<comment type="interaction">
    <interactant intactId="EBI-724310">
        <id>Q15038</id>
    </interactant>
    <interactant intactId="EBI-746453">
        <id>P54725</id>
        <label>RAD23A</label>
    </interactant>
    <organismsDiffer>false</organismsDiffer>
    <experiments>3</experiments>
</comment>
<comment type="interaction">
    <interactant intactId="EBI-724310">
        <id>Q15038</id>
    </interactant>
    <interactant intactId="EBI-744023">
        <id>Q9BTL3</id>
        <label>RAMAC</label>
    </interactant>
    <organismsDiffer>false</organismsDiffer>
    <experiments>3</experiments>
</comment>
<comment type="interaction">
    <interactant intactId="EBI-724310">
        <id>Q15038</id>
    </interactant>
    <interactant intactId="EBI-12123390">
        <id>Q9NWB1-5</id>
        <label>RBFOX1</label>
    </interactant>
    <organismsDiffer>false</organismsDiffer>
    <experiments>4</experiments>
</comment>
<comment type="interaction">
    <interactant intactId="EBI-724310">
        <id>Q15038</id>
    </interactant>
    <interactant intactId="EBI-746056">
        <id>O43251</id>
        <label>RBFOX2</label>
    </interactant>
    <organismsDiffer>false</organismsDiffer>
    <experiments>5</experiments>
</comment>
<comment type="interaction">
    <interactant intactId="EBI-724310">
        <id>Q15038</id>
    </interactant>
    <interactant intactId="EBI-11963050">
        <id>O43251-10</id>
        <label>RBFOX2</label>
    </interactant>
    <organismsDiffer>false</organismsDiffer>
    <experiments>4</experiments>
</comment>
<comment type="interaction">
    <interactant intactId="EBI-724310">
        <id>Q15038</id>
    </interactant>
    <interactant intactId="EBI-12224445">
        <id>Q9BX46-2</id>
        <label>RBM24</label>
    </interactant>
    <organismsDiffer>false</organismsDiffer>
    <experiments>3</experiments>
</comment>
<comment type="interaction">
    <interactant intactId="EBI-724310">
        <id>Q15038</id>
    </interactant>
    <interactant intactId="EBI-2880658">
        <id>Q6ZSC3</id>
        <label>RBM43</label>
    </interactant>
    <organismsDiffer>false</organismsDiffer>
    <experiments>3</experiments>
</comment>
<comment type="interaction">
    <interactant intactId="EBI-724310">
        <id>Q15038</id>
    </interactant>
    <interactant intactId="EBI-740322">
        <id>Q93062</id>
        <label>RBPMS</label>
    </interactant>
    <organismsDiffer>false</organismsDiffer>
    <experiments>6</experiments>
</comment>
<comment type="interaction">
    <interactant intactId="EBI-724310">
        <id>Q15038</id>
    </interactant>
    <interactant intactId="EBI-740343">
        <id>Q93062-3</id>
        <label>RBPMS</label>
    </interactant>
    <organismsDiffer>false</organismsDiffer>
    <experiments>7</experiments>
</comment>
<comment type="interaction">
    <interactant intactId="EBI-724310">
        <id>Q15038</id>
    </interactant>
    <interactant intactId="EBI-372094">
        <id>Q9BQY4</id>
        <label>RHOXF2</label>
    </interactant>
    <organismsDiffer>false</organismsDiffer>
    <experiments>12</experiments>
</comment>
<comment type="interaction">
    <interactant intactId="EBI-724310">
        <id>Q15038</id>
    </interactant>
    <interactant intactId="EBI-2129242">
        <id>Q9Y4L5</id>
        <label>RNF115</label>
    </interactant>
    <organismsDiffer>false</organismsDiffer>
    <experiments>5</experiments>
</comment>
<comment type="interaction">
    <interactant intactId="EBI-724310">
        <id>Q15038</id>
    </interactant>
    <interactant intactId="EBI-751555">
        <id>Q9H0X6</id>
        <label>RNF208</label>
    </interactant>
    <organismsDiffer>false</organismsDiffer>
    <experiments>10</experiments>
</comment>
<comment type="interaction">
    <interactant intactId="EBI-724310">
        <id>Q15038</id>
    </interactant>
    <interactant intactId="EBI-2845060">
        <id>Q7L0R7</id>
        <label>RNF44</label>
    </interactant>
    <organismsDiffer>false</organismsDiffer>
    <experiments>3</experiments>
</comment>
<comment type="interaction">
    <interactant intactId="EBI-724310">
        <id>Q15038</id>
    </interactant>
    <interactant intactId="EBI-10172778">
        <id>A1L4F5</id>
        <label>ROR2</label>
    </interactant>
    <organismsDiffer>false</organismsDiffer>
    <experiments>3</experiments>
</comment>
<comment type="interaction">
    <interactant intactId="EBI-724310">
        <id>Q15038</id>
    </interactant>
    <interactant intactId="EBI-6422642">
        <id>Q01974</id>
        <label>ROR2</label>
    </interactant>
    <organismsDiffer>false</organismsDiffer>
    <experiments>8</experiments>
</comment>
<comment type="interaction">
    <interactant intactId="EBI-724310">
        <id>Q15038</id>
    </interactant>
    <interactant intactId="EBI-357375">
        <id>P62979</id>
        <label>RPS27A</label>
    </interactant>
    <organismsDiffer>false</organismsDiffer>
    <experiments>9</experiments>
</comment>
<comment type="interaction">
    <interactant intactId="EBI-724310">
        <id>Q15038</id>
    </interactant>
    <interactant intactId="EBI-2822515">
        <id>Q8WU79</id>
        <label>SMAP2</label>
    </interactant>
    <organismsDiffer>false</organismsDiffer>
    <experiments>6</experiments>
</comment>
<comment type="interaction">
    <interactant intactId="EBI-724310">
        <id>Q15038</id>
    </interactant>
    <interactant intactId="EBI-396727">
        <id>Q9HAU4</id>
        <label>SMURF2</label>
    </interactant>
    <organismsDiffer>false</organismsDiffer>
    <experiments>2</experiments>
</comment>
<comment type="interaction">
    <interactant intactId="EBI-724310">
        <id>Q15038</id>
    </interactant>
    <interactant intactId="EBI-766589">
        <id>P09234</id>
        <label>SNRPC</label>
    </interactant>
    <organismsDiffer>false</organismsDiffer>
    <experiments>3</experiments>
</comment>
<comment type="interaction">
    <interactant intactId="EBI-724310">
        <id>Q15038</id>
    </interactant>
    <interactant intactId="EBI-1167533">
        <id>P56693</id>
        <label>SOX10</label>
    </interactant>
    <organismsDiffer>false</organismsDiffer>
    <experiments>3</experiments>
</comment>
<comment type="interaction">
    <interactant intactId="EBI-724310">
        <id>Q15038</id>
    </interactant>
    <interactant intactId="EBI-743976">
        <id>Q96LM6</id>
        <label>SPMIP9</label>
    </interactant>
    <organismsDiffer>false</organismsDiffer>
    <experiments>9</experiments>
</comment>
<comment type="interaction">
    <interactant intactId="EBI-724310">
        <id>Q15038</id>
    </interactant>
    <interactant intactId="EBI-307104">
        <id>Q13501</id>
        <label>SQSTM1</label>
    </interactant>
    <organismsDiffer>false</organismsDiffer>
    <experiments>4</experiments>
</comment>
<comment type="interaction">
    <interactant intactId="EBI-724310">
        <id>Q15038</id>
    </interactant>
    <interactant intactId="EBI-373258">
        <id>O75886</id>
        <label>STAM2</label>
    </interactant>
    <organismsDiffer>false</organismsDiffer>
    <experiments>7</experiments>
</comment>
<comment type="interaction">
    <interactant intactId="EBI-724310">
        <id>Q15038</id>
    </interactant>
    <interactant intactId="EBI-529518">
        <id>Q86VP1</id>
        <label>TAX1BP1</label>
    </interactant>
    <organismsDiffer>false</organismsDiffer>
    <experiments>6</experiments>
</comment>
<comment type="interaction">
    <interactant intactId="EBI-724310">
        <id>Q15038</id>
    </interactant>
    <interactant intactId="EBI-2824328">
        <id>O95947</id>
        <label>TBX6</label>
    </interactant>
    <organismsDiffer>false</organismsDiffer>
    <experiments>3</experiments>
</comment>
<comment type="interaction">
    <interactant intactId="EBI-724310">
        <id>Q15038</id>
    </interactant>
    <interactant intactId="EBI-752030">
        <id>Q96A09</id>
        <label>TENT5B</label>
    </interactant>
    <organismsDiffer>false</organismsDiffer>
    <experiments>7</experiments>
</comment>
<comment type="interaction">
    <interactant intactId="EBI-724310">
        <id>Q15038</id>
    </interactant>
    <interactant intactId="EBI-357061">
        <id>Q92734</id>
        <label>TFG</label>
    </interactant>
    <organismsDiffer>false</organismsDiffer>
    <experiments>5</experiments>
</comment>
<comment type="interaction">
    <interactant intactId="EBI-724310">
        <id>Q15038</id>
    </interactant>
    <interactant intactId="EBI-11064654">
        <id>Q01085-2</id>
        <label>TIAL1</label>
    </interactant>
    <organismsDiffer>false</organismsDiffer>
    <experiments>5</experiments>
</comment>
<comment type="interaction">
    <interactant intactId="EBI-724310">
        <id>Q15038</id>
    </interactant>
    <interactant intactId="EBI-711424">
        <id>Q04724</id>
        <label>TLE1</label>
    </interactant>
    <organismsDiffer>false</organismsDiffer>
    <experiments>3</experiments>
</comment>
<comment type="interaction">
    <interactant intactId="EBI-724310">
        <id>Q15038</id>
    </interactant>
    <interactant intactId="EBI-11741437">
        <id>Q08117-2</id>
        <label>TLE5</label>
    </interactant>
    <organismsDiffer>false</organismsDiffer>
    <experiments>3</experiments>
</comment>
<comment type="interaction">
    <interactant intactId="EBI-724310">
        <id>Q15038</id>
    </interactant>
    <interactant intactId="EBI-357849">
        <id>Q15025</id>
        <label>TNIP1</label>
    </interactant>
    <organismsDiffer>false</organismsDiffer>
    <experiments>3</experiments>
</comment>
<comment type="interaction">
    <interactant intactId="EBI-724310">
        <id>Q15038</id>
    </interactant>
    <interactant intactId="EBI-2509913">
        <id>Q96KP6</id>
        <label>TNIP3</label>
    </interactant>
    <organismsDiffer>false</organismsDiffer>
    <experiments>9</experiments>
</comment>
<comment type="interaction">
    <interactant intactId="EBI-724310">
        <id>Q15038</id>
    </interactant>
    <interactant intactId="EBI-10249783">
        <id>Q6FIE9</id>
        <label>TOLLIP</label>
    </interactant>
    <organismsDiffer>false</organismsDiffer>
    <experiments>3</experiments>
</comment>
<comment type="interaction">
    <interactant intactId="EBI-724310">
        <id>Q15038</id>
    </interactant>
    <interactant intactId="EBI-74615">
        <id>Q9H0E2</id>
        <label>TOLLIP</label>
    </interactant>
    <organismsDiffer>false</organismsDiffer>
    <experiments>11</experiments>
</comment>
<comment type="interaction">
    <interactant intactId="EBI-724310">
        <id>Q15038</id>
    </interactant>
    <interactant intactId="EBI-12117154">
        <id>O60784-2</id>
        <label>TOM1</label>
    </interactant>
    <organismsDiffer>false</organismsDiffer>
    <experiments>3</experiments>
</comment>
<comment type="interaction">
    <interactant intactId="EBI-724310">
        <id>Q15038</id>
    </interactant>
    <interactant intactId="EBI-357304">
        <id>P62987</id>
        <label>UBA52</label>
    </interactant>
    <organismsDiffer>false</organismsDiffer>
    <experiments>7</experiments>
</comment>
<comment type="interaction">
    <interactant intactId="EBI-724310">
        <id>Q15038</id>
    </interactant>
    <interactant intactId="EBI-749370">
        <id>Q9BSL1</id>
        <label>UBAC1</label>
    </interactant>
    <organismsDiffer>false</organismsDiffer>
    <experiments>7</experiments>
</comment>
<comment type="interaction">
    <interactant intactId="EBI-724310">
        <id>Q15038</id>
    </interactant>
    <interactant intactId="EBI-2514383">
        <id>Q5T6F2</id>
        <label>UBAP2</label>
    </interactant>
    <organismsDiffer>false</organismsDiffer>
    <experiments>3</experiments>
</comment>
<comment type="interaction">
    <interactant intactId="EBI-724310">
        <id>Q15038</id>
    </interactant>
    <interactant intactId="EBI-2105393">
        <id>P57075</id>
        <label>UBASH3A</label>
    </interactant>
    <organismsDiffer>false</organismsDiffer>
    <experiments>4</experiments>
</comment>
<comment type="interaction">
    <interactant intactId="EBI-724310">
        <id>Q15038</id>
    </interactant>
    <interactant intactId="EBI-7353612">
        <id>P57075-2</id>
        <label>UBASH3A</label>
    </interactant>
    <organismsDiffer>false</organismsDiffer>
    <experiments>3</experiments>
</comment>
<comment type="interaction">
    <interactant intactId="EBI-724310">
        <id>Q15038</id>
    </interactant>
    <interactant intactId="EBI-1380492">
        <id>Q8TF42</id>
        <label>UBASH3B</label>
    </interactant>
    <organismsDiffer>false</organismsDiffer>
    <experiments>6</experiments>
</comment>
<comment type="interaction">
    <interactant intactId="EBI-724310">
        <id>Q15038</id>
    </interactant>
    <interactant intactId="EBI-413034">
        <id>P0CG47</id>
        <label>UBB</label>
    </interactant>
    <organismsDiffer>false</organismsDiffer>
    <experiments>7</experiments>
</comment>
<comment type="interaction">
    <interactant intactId="EBI-724310">
        <id>Q15038</id>
    </interactant>
    <interactant intactId="EBI-1642104">
        <id>Q5U5U6</id>
        <label>UBB</label>
    </interactant>
    <organismsDiffer>false</organismsDiffer>
    <experiments>3</experiments>
</comment>
<comment type="interaction">
    <interactant intactId="EBI-724310">
        <id>Q15038</id>
    </interactant>
    <interactant intactId="EBI-3390054">
        <id>P0CG48</id>
        <label>UBC</label>
    </interactant>
    <organismsDiffer>false</organismsDiffer>
    <experiments>6</experiments>
</comment>
<comment type="interaction">
    <interactant intactId="EBI-724310">
        <id>Q15038</id>
    </interactant>
    <interactant intactId="EBI-745483">
        <id>Q96C32</id>
        <label>UBC</label>
    </interactant>
    <organismsDiffer>false</organismsDiffer>
    <experiments>4</experiments>
</comment>
<comment type="interaction">
    <interactant intactId="EBI-724310">
        <id>Q15038</id>
    </interactant>
    <interactant intactId="EBI-745527">
        <id>Q9Y2X8</id>
        <label>UBE2D4</label>
    </interactant>
    <organismsDiffer>false</organismsDiffer>
    <experiments>3</experiments>
</comment>
<comment type="interaction">
    <interactant intactId="EBI-724310">
        <id>Q15038</id>
    </interactant>
    <interactant intactId="EBI-2129763">
        <id>Q96LR5</id>
        <label>UBE2E2</label>
    </interactant>
    <organismsDiffer>false</organismsDiffer>
    <experiments>3</experiments>
</comment>
<comment type="interaction">
    <interactant intactId="EBI-724310">
        <id>Q15038</id>
    </interactant>
    <interactant intactId="EBI-348496">
        <id>Q969T4</id>
        <label>UBE2E3</label>
    </interactant>
    <organismsDiffer>false</organismsDiffer>
    <experiments>3</experiments>
</comment>
<comment type="interaction">
    <interactant intactId="EBI-724310">
        <id>Q15038</id>
    </interactant>
    <interactant intactId="EBI-1050671">
        <id>Q13404</id>
        <label>UBE2V1</label>
    </interactant>
    <organismsDiffer>false</organismsDiffer>
    <experiments>3</experiments>
</comment>
<comment type="interaction">
    <interactant intactId="EBI-724310">
        <id>Q15038</id>
    </interactant>
    <interactant intactId="EBI-741480">
        <id>Q9UMX0</id>
        <label>UBQLN1</label>
    </interactant>
    <organismsDiffer>false</organismsDiffer>
    <experiments>3</experiments>
</comment>
<comment type="interaction">
    <interactant intactId="EBI-724310">
        <id>Q15038</id>
    </interactant>
    <interactant intactId="EBI-947187">
        <id>Q9UHD9</id>
        <label>UBQLN2</label>
    </interactant>
    <organismsDiffer>false</organismsDiffer>
    <experiments>3</experiments>
</comment>
<comment type="interaction">
    <interactant intactId="EBI-724310">
        <id>Q15038</id>
    </interactant>
    <interactant intactId="EBI-1993899">
        <id>Q9BZV1</id>
        <label>UBXN6</label>
    </interactant>
    <organismsDiffer>false</organismsDiffer>
    <experiments>5</experiments>
</comment>
<comment type="interaction">
    <interactant intactId="EBI-724310">
        <id>Q15038</id>
    </interactant>
    <interactant intactId="EBI-1993627">
        <id>O94888</id>
        <label>UBXN7</label>
    </interactant>
    <organismsDiffer>false</organismsDiffer>
    <experiments>3</experiments>
</comment>
<comment type="interaction">
    <interactant intactId="EBI-724310">
        <id>Q15038</id>
    </interactant>
    <interactant intactId="EBI-714351">
        <id>Q92995</id>
        <label>USP13</label>
    </interactant>
    <organismsDiffer>false</organismsDiffer>
    <experiments>3</experiments>
</comment>
<comment type="interaction">
    <interactant intactId="EBI-724310">
        <id>Q15038</id>
    </interactant>
    <interactant intactId="EBI-741277">
        <id>P45974</id>
        <label>USP5</label>
    </interactant>
    <organismsDiffer>false</organismsDiffer>
    <experiments>3</experiments>
</comment>
<comment type="interaction">
    <interactant intactId="EBI-724310">
        <id>Q15038</id>
    </interactant>
    <interactant intactId="EBI-10191303">
        <id>O95231</id>
        <label>VENTX</label>
    </interactant>
    <organismsDiffer>false</organismsDiffer>
    <experiments>3</experiments>
</comment>
<comment type="interaction">
    <interactant intactId="EBI-724310">
        <id>Q15038</id>
    </interactant>
    <interactant intactId="EBI-11980193">
        <id>Q14119</id>
        <label>VEZF1</label>
    </interactant>
    <organismsDiffer>false</organismsDiffer>
    <experiments>3</experiments>
</comment>
<comment type="interaction">
    <interactant intactId="EBI-724310">
        <id>Q15038</id>
    </interactant>
    <interactant intactId="EBI-10254232">
        <id>Q6RSH7</id>
        <label>VHLL</label>
    </interactant>
    <organismsDiffer>false</organismsDiffer>
    <experiments>8</experiments>
</comment>
<comment type="interaction">
    <interactant intactId="EBI-724310">
        <id>Q15038</id>
    </interactant>
    <interactant intactId="EBI-2559305">
        <id>A5D8V6</id>
        <label>VPS37C</label>
    </interactant>
    <organismsDiffer>false</organismsDiffer>
    <experiments>6</experiments>
</comment>
<comment type="interaction">
    <interactant intactId="EBI-724310">
        <id>Q15038</id>
    </interactant>
    <interactant intactId="EBI-12040603">
        <id>Q9NZC7-5</id>
        <label>WWOX</label>
    </interactant>
    <organismsDiffer>false</organismsDiffer>
    <experiments>6</experiments>
</comment>
<comment type="interaction">
    <interactant intactId="EBI-724310">
        <id>Q15038</id>
    </interactant>
    <interactant intactId="EBI-2510804">
        <id>Q5VVQ6</id>
        <label>YOD1</label>
    </interactant>
    <organismsDiffer>false</organismsDiffer>
    <experiments>7</experiments>
</comment>
<comment type="interaction">
    <interactant intactId="EBI-724310">
        <id>Q15038</id>
    </interactant>
    <interactant intactId="EBI-10188476">
        <id>A0A0C4DGF1</id>
        <label>ZBTB32</label>
    </interactant>
    <organismsDiffer>false</organismsDiffer>
    <experiments>5</experiments>
</comment>
<comment type="interaction">
    <interactant intactId="EBI-724310">
        <id>Q15038</id>
    </interactant>
    <interactant intactId="EBI-742550">
        <id>Q96K80</id>
        <label>ZC3H10</label>
    </interactant>
    <organismsDiffer>false</organismsDiffer>
    <experiments>7</experiments>
</comment>
<comment type="interaction">
    <interactant intactId="EBI-724310">
        <id>Q15038</id>
    </interactant>
    <interactant intactId="EBI-3921109">
        <id>Q8N6M9</id>
        <label>ZFAND2A</label>
    </interactant>
    <organismsDiffer>false</organismsDiffer>
    <experiments>3</experiments>
</comment>
<comment type="interaction">
    <interactant intactId="EBI-724310">
        <id>Q15038</id>
    </interactant>
    <interactant intactId="EBI-747823">
        <id>Q8WV99</id>
        <label>ZFAND2B</label>
    </interactant>
    <organismsDiffer>false</organismsDiffer>
    <experiments>10</experiments>
</comment>
<comment type="subcellular location">
    <subcellularLocation>
        <location evidence="5 6 7 10 12">Cytoplasm</location>
    </subcellularLocation>
    <subcellularLocation>
        <location evidence="6 7 8 10 12">Nucleus</location>
    </subcellularLocation>
    <subcellularLocation>
        <location evidence="4">Nucleus speckle</location>
    </subcellularLocation>
    <subcellularLocation>
        <location evidence="12">Nucleus</location>
        <location evidence="12">Nuclear body</location>
    </subcellularLocation>
    <subcellularLocation>
        <location evidence="6 12">Cytoplasm</location>
        <location evidence="6 12">Stress granule</location>
    </subcellularLocation>
    <text evidence="6 10 12">Predominantly nuclear in macrophages, stimulation of IL17RB with its ligand IL17E induces accumulation in the cytoplasm (PubMed:22070932). Predominantly cytoplasmic when unphosphorylated and localizes to the nucleus following phosphorylation by HIPK2 (PubMed:33591310). Localizes to stress granules under cellular stress conditions (PubMed:17984221).</text>
</comment>
<comment type="alternative products">
    <event type="alternative splicing"/>
    <isoform>
        <id>Q15038-1</id>
        <name>1</name>
        <sequence type="displayed"/>
    </isoform>
    <isoform>
        <id>Q15038-2</id>
        <name>2</name>
        <sequence type="described" ref="VSP_042773"/>
    </isoform>
    <isoform>
        <id>Q15038-6</id>
        <name>6</name>
        <sequence type="described" ref="VSP_055181"/>
    </isoform>
    <isoform>
        <id>Q15038-3</id>
        <name>3</name>
        <sequence type="described" ref="VSP_045679"/>
    </isoform>
    <isoform>
        <id>Q15038-4</id>
        <name>4</name>
        <sequence type="described" ref="VSP_045678"/>
    </isoform>
    <isoform>
        <id>Q15038-5</id>
        <name>5</name>
        <sequence type="described" ref="VSP_046764"/>
    </isoform>
</comment>
<comment type="tissue specificity">
    <text evidence="3">Widely expressed. Expressed in spleen, thymus, prostate, testis, ovary, small intestine, colon and leukocytes. Down-regulated in multiple myeloma.</text>
</comment>
<comment type="induction">
    <text evidence="6">Induced by cellular stress.</text>
</comment>
<comment type="PTM">
    <text evidence="4 8 10">Ubiquitinated (PubMed:11342538, PubMed:21274613, PubMed:22070932). Ubiquitinated by SMURF2, leading to proteasomal degradation (PubMed:22070932). Ubiquitinated by NEDD4, leading to proteasomal degradation (PubMed:11342538).</text>
</comment>
<comment type="PTM">
    <text evidence="12">Following DNA damage, phosphorylated by HIPK2 which promotes DAZAP2 localization to the nucleus, reduces interaction of DAZAP2 with HIPK2 and SIAH1, and prevents DAZAP2-dependent ubiquitination of HIPK2 by E3 ubiquitin-protein ligase SIAH1 and subsequent HIPK2 proteasomal degradation.</text>
</comment>
<comment type="sequence caution" evidence="17">
    <conflict type="erroneous initiation">
        <sequence resource="EMBL-CDS" id="BAA06545"/>
    </conflict>
    <text>Extended N-terminus.</text>
</comment>
<protein>
    <recommendedName>
        <fullName evidence="18">DAZ-associated protein 2</fullName>
    </recommendedName>
    <alternativeName>
        <fullName>Deleted in azoospermia-associated protein 2</fullName>
    </alternativeName>
    <alternativeName>
        <fullName evidence="14">Proline-rich transcript in brain protein</fullName>
    </alternativeName>
</protein>
<sequence>MNSKGQYPTQPTYPVQPPGNPVYPQTLHLPQAPPYTDAPPAYSELYRPSFVHPGAATVPTMSAAFPGASLYLPMAQSVAVGPLGSTIPMAYYPVGPIYPPGSTVLVEGGYDAGARFGAGATAGNIPPPPPGCPPNAAQLAVMQGANVLVTQRKGNFFMGGSDGGYTIW</sequence>
<feature type="chain" id="PRO_0000079788" description="DAZ-associated protein 2">
    <location>
        <begin position="1"/>
        <end position="168"/>
    </location>
</feature>
<feature type="region of interest" description="Disordered" evidence="2">
    <location>
        <begin position="1"/>
        <end position="25"/>
    </location>
</feature>
<feature type="short sequence motif" description="PPAY" evidence="4">
    <location>
        <begin position="39"/>
        <end position="42"/>
    </location>
</feature>
<feature type="compositionally biased region" description="Low complexity" evidence="2">
    <location>
        <begin position="1"/>
        <end position="13"/>
    </location>
</feature>
<feature type="modified residue" description="Phosphoserine; by HIPK2" evidence="12">
    <location>
        <position position="77"/>
    </location>
</feature>
<feature type="splice variant" id="VSP_045678" description="In isoform 4." evidence="16">
    <location>
        <begin position="45"/>
        <end position="126"/>
    </location>
</feature>
<feature type="splice variant" id="VSP_045679" description="In isoform 3." evidence="15">
    <location>
        <begin position="45"/>
        <end position="76"/>
    </location>
</feature>
<feature type="splice variant" id="VSP_055181" description="In isoform 6." evidence="17">
    <location>
        <begin position="65"/>
        <end position="86"/>
    </location>
</feature>
<feature type="splice variant" id="VSP_046764" description="In isoform 5." evidence="13">
    <original>GSTVLVEGGYDAGARFGAGATAGNIPPPPPGCPPNAAQLAVMQGANVLVTQRKGNFFMGGSDGGYTIW</original>
    <variation>ASTSWMPSQCCSACSHAGSQRPRNSAEGELLHGWFRWWLHHLVRNQGHLCAGKDITYLQHFSQCNCFSHINLKLQFRHMLLGCLSGAQTFRHFSNLIRNHVMVAVPP</variation>
    <location>
        <begin position="101"/>
        <end position="168"/>
    </location>
</feature>
<feature type="splice variant" id="VSP_042773" description="In isoform 2." evidence="13">
    <original>PPPPGCPPNAAQLAVMQGANVLVTQRKGNFFMGGSDGGYTIW</original>
    <variation>VKEDQDHDREQGEEDNGDNNLERRGKM</variation>
    <location>
        <begin position="127"/>
        <end position="168"/>
    </location>
</feature>
<feature type="sequence variant" id="VAR_061639" description="In dbSNP:rs57917280.">
    <original>S</original>
    <variation>A</variation>
    <location>
        <position position="102"/>
    </location>
</feature>
<feature type="mutagenesis site" description="Does not affect ubiquitin-mediated degradation. Abolishes nuclear localization with the protein located in the cytoplasm." evidence="8">
    <original>K</original>
    <variation>A</variation>
    <location>
        <position position="4"/>
    </location>
</feature>
<feature type="mutagenesis site" description="Abolishes interaction with NEDD4. Abolishes NEDD4-mediated ubiquitination." evidence="4">
    <original>PAY</original>
    <variation>AAA</variation>
    <location>
        <begin position="40"/>
        <end position="42"/>
    </location>
</feature>
<feature type="mutagenesis site" description="Loss of phosphorylation by HIPK2." evidence="12">
    <original>S</original>
    <variation>A</variation>
    <location>
        <position position="77"/>
    </location>
</feature>
<feature type="mutagenesis site" description="Abolishes ubiquitin-mediated degradation. Does not affect nuclear localization." evidence="8">
    <original>K</original>
    <variation>A</variation>
    <location>
        <position position="153"/>
    </location>
</feature>
<feature type="sequence conflict" description="In Ref. 5; BAG64775." evidence="17" ref="5">
    <original>L</original>
    <variation>P</variation>
    <location>
        <position position="29"/>
    </location>
</feature>
<feature type="sequence conflict" description="In Ref. 1; AAR11454." evidence="17" ref="1">
    <original>R</original>
    <variation>S</variation>
    <location>
        <position position="47"/>
    </location>
</feature>
<feature type="sequence conflict" description="In Ref. 2; BU662353." evidence="17" ref="2">
    <original>A</original>
    <variation>V</variation>
    <location>
        <position position="90"/>
    </location>
</feature>
<organism>
    <name type="scientific">Homo sapiens</name>
    <name type="common">Human</name>
    <dbReference type="NCBI Taxonomy" id="9606"/>
    <lineage>
        <taxon>Eukaryota</taxon>
        <taxon>Metazoa</taxon>
        <taxon>Chordata</taxon>
        <taxon>Craniata</taxon>
        <taxon>Vertebrata</taxon>
        <taxon>Euteleostomi</taxon>
        <taxon>Mammalia</taxon>
        <taxon>Eutheria</taxon>
        <taxon>Euarchontoglires</taxon>
        <taxon>Primates</taxon>
        <taxon>Haplorrhini</taxon>
        <taxon>Catarrhini</taxon>
        <taxon>Hominidae</taxon>
        <taxon>Homo</taxon>
    </lineage>
</organism>
<name>DAZP2_HUMAN</name>
<accession>Q15038</accession>
<accession>A8K254</accession>
<accession>B4DDT5</accession>
<accession>B4E1G3</accession>
<accession>C9JA96</accession>
<accession>C9JP84</accession>
<accession>E9PB45</accession>
<accession>F8VU62</accession>
<dbReference type="EMBL" id="AY430097">
    <property type="protein sequence ID" value="AAR11454.1"/>
    <property type="molecule type" value="mRNA"/>
</dbReference>
<dbReference type="EMBL" id="BU662353">
    <property type="status" value="NOT_ANNOTATED_CDS"/>
    <property type="molecule type" value="mRNA"/>
</dbReference>
<dbReference type="EMBL" id="D31767">
    <property type="protein sequence ID" value="BAA06545.2"/>
    <property type="status" value="ALT_INIT"/>
    <property type="molecule type" value="mRNA"/>
</dbReference>
<dbReference type="EMBL" id="BX441137">
    <property type="status" value="NOT_ANNOTATED_CDS"/>
    <property type="molecule type" value="mRNA"/>
</dbReference>
<dbReference type="EMBL" id="AK095963">
    <property type="status" value="NOT_ANNOTATED_CDS"/>
    <property type="molecule type" value="mRNA"/>
</dbReference>
<dbReference type="EMBL" id="AK290119">
    <property type="protein sequence ID" value="BAF82808.1"/>
    <property type="molecule type" value="mRNA"/>
</dbReference>
<dbReference type="EMBL" id="AK293330">
    <property type="protein sequence ID" value="BAG56846.1"/>
    <property type="molecule type" value="mRNA"/>
</dbReference>
<dbReference type="EMBL" id="AK303828">
    <property type="protein sequence ID" value="BAG64775.1"/>
    <property type="molecule type" value="mRNA"/>
</dbReference>
<dbReference type="EMBL" id="AC046135">
    <property type="status" value="NOT_ANNOTATED_CDS"/>
    <property type="molecule type" value="Genomic_DNA"/>
</dbReference>
<dbReference type="EMBL" id="AC139768">
    <property type="status" value="NOT_ANNOTATED_CDS"/>
    <property type="molecule type" value="Genomic_DNA"/>
</dbReference>
<dbReference type="EMBL" id="CH471111">
    <property type="protein sequence ID" value="EAW58181.1"/>
    <property type="molecule type" value="Genomic_DNA"/>
</dbReference>
<dbReference type="EMBL" id="BC002334">
    <property type="protein sequence ID" value="AAH02334.1"/>
    <property type="molecule type" value="mRNA"/>
</dbReference>
<dbReference type="EMBL" id="BC007900">
    <property type="protein sequence ID" value="AAH07900.1"/>
    <property type="molecule type" value="mRNA"/>
</dbReference>
<dbReference type="CCDS" id="CCDS44884.1">
    <molecule id="Q15038-2"/>
</dbReference>
<dbReference type="CCDS" id="CCDS44885.1">
    <molecule id="Q15038-5"/>
</dbReference>
<dbReference type="CCDS" id="CCDS44886.1">
    <molecule id="Q15038-6"/>
</dbReference>
<dbReference type="CCDS" id="CCDS44887.1">
    <molecule id="Q15038-3"/>
</dbReference>
<dbReference type="CCDS" id="CCDS44888.1">
    <molecule id="Q15038-4"/>
</dbReference>
<dbReference type="CCDS" id="CCDS8809.1">
    <molecule id="Q15038-1"/>
</dbReference>
<dbReference type="RefSeq" id="NP_001129736.1">
    <molecule id="Q15038-6"/>
    <property type="nucleotide sequence ID" value="NM_001136264.2"/>
</dbReference>
<dbReference type="RefSeq" id="NP_001129738.1">
    <molecule id="Q15038-5"/>
    <property type="nucleotide sequence ID" value="NM_001136266.2"/>
</dbReference>
<dbReference type="RefSeq" id="NP_001129739.1">
    <molecule id="Q15038-3"/>
    <property type="nucleotide sequence ID" value="NM_001136267.2"/>
</dbReference>
<dbReference type="RefSeq" id="NP_001129740.1">
    <molecule id="Q15038-4"/>
    <property type="nucleotide sequence ID" value="NM_001136268.2"/>
</dbReference>
<dbReference type="RefSeq" id="NP_001129741.1">
    <molecule id="Q15038-2"/>
    <property type="nucleotide sequence ID" value="NM_001136269.2"/>
</dbReference>
<dbReference type="RefSeq" id="NP_055579.1">
    <molecule id="Q15038-1"/>
    <property type="nucleotide sequence ID" value="NM_014764.4"/>
</dbReference>
<dbReference type="BioGRID" id="115143">
    <property type="interactions" value="193"/>
</dbReference>
<dbReference type="FunCoup" id="Q15038">
    <property type="interactions" value="1956"/>
</dbReference>
<dbReference type="IntAct" id="Q15038">
    <property type="interactions" value="191"/>
</dbReference>
<dbReference type="MINT" id="Q15038"/>
<dbReference type="STRING" id="9606.ENSP00000448051"/>
<dbReference type="MoonDB" id="Q15038">
    <property type="type" value="Predicted"/>
</dbReference>
<dbReference type="iPTMnet" id="Q15038"/>
<dbReference type="PhosphoSitePlus" id="Q15038"/>
<dbReference type="BioMuta" id="DAZAP2"/>
<dbReference type="DMDM" id="44887865"/>
<dbReference type="jPOST" id="Q15038"/>
<dbReference type="MassIVE" id="Q15038"/>
<dbReference type="PaxDb" id="9606-ENSP00000448051"/>
<dbReference type="PeptideAtlas" id="Q15038"/>
<dbReference type="ProteomicsDB" id="11080"/>
<dbReference type="ProteomicsDB" id="19140"/>
<dbReference type="ProteomicsDB" id="60386">
    <molecule id="Q15038-1"/>
</dbReference>
<dbReference type="ProteomicsDB" id="60387">
    <molecule id="Q15038-2"/>
</dbReference>
<dbReference type="ProteomicsDB" id="9296"/>
<dbReference type="Pumba" id="Q15038"/>
<dbReference type="Antibodypedia" id="26360">
    <property type="antibodies" value="103 antibodies from 22 providers"/>
</dbReference>
<dbReference type="DNASU" id="9802"/>
<dbReference type="Ensembl" id="ENST00000412716.8">
    <molecule id="Q15038-1"/>
    <property type="protein sequence ID" value="ENSP00000394699.2"/>
    <property type="gene ID" value="ENSG00000183283.16"/>
</dbReference>
<dbReference type="Ensembl" id="ENST00000425012.6">
    <molecule id="Q15038-2"/>
    <property type="protein sequence ID" value="ENSP00000408251.2"/>
    <property type="gene ID" value="ENSG00000183283.16"/>
</dbReference>
<dbReference type="Ensembl" id="ENST00000439799.6">
    <molecule id="Q15038-4"/>
    <property type="protein sequence ID" value="ENSP00000398804.2"/>
    <property type="gene ID" value="ENSG00000183283.16"/>
</dbReference>
<dbReference type="Ensembl" id="ENST00000449723.7">
    <molecule id="Q15038-6"/>
    <property type="protein sequence ID" value="ENSP00000412812.2"/>
    <property type="gene ID" value="ENSG00000183283.16"/>
</dbReference>
<dbReference type="Ensembl" id="ENST00000549555.5">
    <molecule id="Q15038-5"/>
    <property type="protein sequence ID" value="ENSP00000448051.1"/>
    <property type="gene ID" value="ENSG00000183283.16"/>
</dbReference>
<dbReference type="Ensembl" id="ENST00000549732.6">
    <molecule id="Q15038-3"/>
    <property type="protein sequence ID" value="ENSP00000446554.2"/>
    <property type="gene ID" value="ENSG00000183283.16"/>
</dbReference>
<dbReference type="GeneID" id="9802"/>
<dbReference type="KEGG" id="hsa:9802"/>
<dbReference type="MANE-Select" id="ENST00000412716.8">
    <property type="protein sequence ID" value="ENSP00000394699.2"/>
    <property type="RefSeq nucleotide sequence ID" value="NM_014764.4"/>
    <property type="RefSeq protein sequence ID" value="NP_055579.1"/>
</dbReference>
<dbReference type="UCSC" id="uc001ryb.4">
    <molecule id="Q15038-1"/>
    <property type="organism name" value="human"/>
</dbReference>
<dbReference type="AGR" id="HGNC:2684"/>
<dbReference type="CTD" id="9802"/>
<dbReference type="DisGeNET" id="9802"/>
<dbReference type="GeneCards" id="DAZAP2"/>
<dbReference type="HGNC" id="HGNC:2684">
    <property type="gene designation" value="DAZAP2"/>
</dbReference>
<dbReference type="HPA" id="ENSG00000183283">
    <property type="expression patterns" value="Low tissue specificity"/>
</dbReference>
<dbReference type="MIM" id="607431">
    <property type="type" value="gene"/>
</dbReference>
<dbReference type="neXtProt" id="NX_Q15038"/>
<dbReference type="OpenTargets" id="ENSG00000183283"/>
<dbReference type="PharmGKB" id="PA27154"/>
<dbReference type="VEuPathDB" id="HostDB:ENSG00000183283"/>
<dbReference type="eggNOG" id="ENOG502QTNQ">
    <property type="taxonomic scope" value="Eukaryota"/>
</dbReference>
<dbReference type="GeneTree" id="ENSGT00390000000685"/>
<dbReference type="HOGENOM" id="CLU_1325998_0_0_1"/>
<dbReference type="InParanoid" id="Q15038"/>
<dbReference type="OMA" id="IYQPRYM"/>
<dbReference type="OrthoDB" id="6514304at2759"/>
<dbReference type="PAN-GO" id="Q15038">
    <property type="GO annotations" value="0 GO annotations based on evolutionary models"/>
</dbReference>
<dbReference type="PhylomeDB" id="Q15038"/>
<dbReference type="TreeFam" id="TF329672"/>
<dbReference type="PathwayCommons" id="Q15038"/>
<dbReference type="SignaLink" id="Q15038"/>
<dbReference type="BioGRID-ORCS" id="9802">
    <property type="hits" value="25 hits in 1165 CRISPR screens"/>
</dbReference>
<dbReference type="CD-CODE" id="DEE660B4">
    <property type="entry name" value="Stress granule"/>
</dbReference>
<dbReference type="ChiTaRS" id="DAZAP2">
    <property type="organism name" value="human"/>
</dbReference>
<dbReference type="GeneWiki" id="DAZAP2"/>
<dbReference type="GenomeRNAi" id="9802"/>
<dbReference type="Pharos" id="Q15038">
    <property type="development level" value="Tbio"/>
</dbReference>
<dbReference type="PRO" id="PR:Q15038"/>
<dbReference type="Proteomes" id="UP000005640">
    <property type="component" value="Chromosome 12"/>
</dbReference>
<dbReference type="RNAct" id="Q15038">
    <property type="molecule type" value="protein"/>
</dbReference>
<dbReference type="Bgee" id="ENSG00000183283">
    <property type="expression patterns" value="Expressed in amniotic fluid and 205 other cell types or tissues"/>
</dbReference>
<dbReference type="ExpressionAtlas" id="Q15038">
    <property type="expression patterns" value="baseline and differential"/>
</dbReference>
<dbReference type="GO" id="GO:0005737">
    <property type="term" value="C:cytoplasm"/>
    <property type="evidence" value="ECO:0000314"/>
    <property type="project" value="UniProtKB"/>
</dbReference>
<dbReference type="GO" id="GO:0010494">
    <property type="term" value="C:cytoplasmic stress granule"/>
    <property type="evidence" value="ECO:0000314"/>
    <property type="project" value="UniProtKB"/>
</dbReference>
<dbReference type="GO" id="GO:0016604">
    <property type="term" value="C:nuclear body"/>
    <property type="evidence" value="ECO:0000314"/>
    <property type="project" value="UniProtKB"/>
</dbReference>
<dbReference type="GO" id="GO:0016607">
    <property type="term" value="C:nuclear speck"/>
    <property type="evidence" value="ECO:0000314"/>
    <property type="project" value="HPA"/>
</dbReference>
<dbReference type="GO" id="GO:0005634">
    <property type="term" value="C:nucleus"/>
    <property type="evidence" value="ECO:0000314"/>
    <property type="project" value="UniProtKB"/>
</dbReference>
<dbReference type="GO" id="GO:0032991">
    <property type="term" value="C:protein-containing complex"/>
    <property type="evidence" value="ECO:0000314"/>
    <property type="project" value="UniProtKB"/>
</dbReference>
<dbReference type="GO" id="GO:0140297">
    <property type="term" value="F:DNA-binding transcription factor binding"/>
    <property type="evidence" value="ECO:0000353"/>
    <property type="project" value="UniProtKB"/>
</dbReference>
<dbReference type="GO" id="GO:0042802">
    <property type="term" value="F:identical protein binding"/>
    <property type="evidence" value="ECO:0000353"/>
    <property type="project" value="IntAct"/>
</dbReference>
<dbReference type="GO" id="GO:0031435">
    <property type="term" value="F:mitogen-activated protein kinase kinase kinase binding"/>
    <property type="evidence" value="ECO:0007669"/>
    <property type="project" value="Ensembl"/>
</dbReference>
<dbReference type="GO" id="GO:0002039">
    <property type="term" value="F:p53 binding"/>
    <property type="evidence" value="ECO:0000353"/>
    <property type="project" value="UniProtKB"/>
</dbReference>
<dbReference type="GO" id="GO:0043539">
    <property type="term" value="F:protein serine/threonine kinase activator activity"/>
    <property type="evidence" value="ECO:0007669"/>
    <property type="project" value="Ensembl"/>
</dbReference>
<dbReference type="GO" id="GO:0120283">
    <property type="term" value="F:protein serine/threonine kinase binding"/>
    <property type="evidence" value="ECO:0000353"/>
    <property type="project" value="UniProtKB"/>
</dbReference>
<dbReference type="GO" id="GO:0030971">
    <property type="term" value="F:receptor tyrosine kinase binding"/>
    <property type="evidence" value="ECO:0007669"/>
    <property type="project" value="Ensembl"/>
</dbReference>
<dbReference type="GO" id="GO:0031625">
    <property type="term" value="F:ubiquitin protein ligase binding"/>
    <property type="evidence" value="ECO:0000353"/>
    <property type="project" value="UniProtKB"/>
</dbReference>
<dbReference type="GO" id="GO:0050699">
    <property type="term" value="F:WW domain binding"/>
    <property type="evidence" value="ECO:0000353"/>
    <property type="project" value="UniProtKB"/>
</dbReference>
<dbReference type="GO" id="GO:1905636">
    <property type="term" value="P:positive regulation of RNA polymerase II regulatory region sequence-specific DNA binding"/>
    <property type="evidence" value="ECO:0000250"/>
    <property type="project" value="UniProtKB"/>
</dbReference>
<dbReference type="GO" id="GO:0031648">
    <property type="term" value="P:protein destabilization"/>
    <property type="evidence" value="ECO:0000314"/>
    <property type="project" value="UniProtKB"/>
</dbReference>
<dbReference type="GO" id="GO:0034063">
    <property type="term" value="P:stress granule assembly"/>
    <property type="evidence" value="ECO:0000315"/>
    <property type="project" value="UniProtKB"/>
</dbReference>
<dbReference type="InterPro" id="IPR022730">
    <property type="entry name" value="DAZ_assoc-2"/>
</dbReference>
<dbReference type="PANTHER" id="PTHR31638">
    <property type="entry name" value="DAZ-ASSOCIATED PROTEIN 2"/>
    <property type="match status" value="1"/>
</dbReference>
<dbReference type="PANTHER" id="PTHR31638:SF4">
    <property type="entry name" value="DAZ-ASSOCIATED PROTEIN 2"/>
    <property type="match status" value="1"/>
</dbReference>
<dbReference type="Pfam" id="PF11029">
    <property type="entry name" value="DAZAP2"/>
    <property type="match status" value="1"/>
</dbReference>
<proteinExistence type="evidence at protein level"/>
<gene>
    <name evidence="18" type="primary">DAZAP2</name>
    <name type="synonym">KIAA0058</name>
    <name evidence="14" type="synonym">PRTB</name>
</gene>
<reference key="1">
    <citation type="journal article" date="2007" name="Chin. Med. J.">
        <title>Molecular features and expression of DAZAP2 in human multiple myeloma.</title>
        <authorList>
            <person name="Shi Y.-W."/>
            <person name="Shen R."/>
            <person name="Ren W."/>
            <person name="Tang L.J."/>
            <person name="Tan D.-R."/>
            <person name="Hu W.-X."/>
        </authorList>
    </citation>
    <scope>NUCLEOTIDE SEQUENCE [MRNA] (ISOFORM 1)</scope>
    <scope>SUBCELLULAR LOCATION</scope>
    <source>
        <tissue>Bone marrow</tissue>
    </source>
</reference>
<reference key="2">
    <citation type="submission" date="2002-10" db="EMBL/GenBank/DDBJ databases">
        <title>Gene expression in human erythroid precursor cells.</title>
        <authorList>
            <person name="Gubin A.N."/>
            <person name="Lee Y.T."/>
            <person name="Bouffard G.G."/>
            <person name="Miller J.L."/>
        </authorList>
    </citation>
    <scope>NUCLEOTIDE SEQUENCE [MRNA] (ISOFORM 3)</scope>
    <source>
        <tissue>Erythroblast</tissue>
    </source>
</reference>
<reference key="3">
    <citation type="journal article" date="1994" name="DNA Res.">
        <title>Prediction of the coding sequences of unidentified human genes. II. The coding sequences of 40 new genes (KIAA0041-KIAA0080) deduced by analysis of cDNA clones from human cell line KG-1.</title>
        <authorList>
            <person name="Nomura N."/>
            <person name="Nagase T."/>
            <person name="Miyajima N."/>
            <person name="Sazuka T."/>
            <person name="Tanaka A."/>
            <person name="Sato S."/>
            <person name="Seki N."/>
            <person name="Kawarabayasi Y."/>
            <person name="Ishikawa K."/>
            <person name="Tabata S."/>
        </authorList>
    </citation>
    <scope>NUCLEOTIDE SEQUENCE [LARGE SCALE MRNA] (ISOFORM 1)</scope>
    <source>
        <tissue>Bone marrow</tissue>
    </source>
</reference>
<reference key="4">
    <citation type="submission" date="2003-04" db="EMBL/GenBank/DDBJ databases">
        <title>Full-length cDNA libraries and normalization.</title>
        <authorList>
            <person name="Li W.B."/>
            <person name="Gruber C."/>
            <person name="Jessee J."/>
            <person name="Polayes D."/>
        </authorList>
    </citation>
    <scope>NUCLEOTIDE SEQUENCE [LARGE SCALE MRNA] (ISOFORM 4)</scope>
    <source>
        <tissue>Fetal brain</tissue>
    </source>
</reference>
<reference key="5">
    <citation type="journal article" date="2004" name="Nat. Genet.">
        <title>Complete sequencing and characterization of 21,243 full-length human cDNAs.</title>
        <authorList>
            <person name="Ota T."/>
            <person name="Suzuki Y."/>
            <person name="Nishikawa T."/>
            <person name="Otsuki T."/>
            <person name="Sugiyama T."/>
            <person name="Irie R."/>
            <person name="Wakamatsu A."/>
            <person name="Hayashi K."/>
            <person name="Sato H."/>
            <person name="Nagai K."/>
            <person name="Kimura K."/>
            <person name="Makita H."/>
            <person name="Sekine M."/>
            <person name="Obayashi M."/>
            <person name="Nishi T."/>
            <person name="Shibahara T."/>
            <person name="Tanaka T."/>
            <person name="Ishii S."/>
            <person name="Yamamoto J."/>
            <person name="Saito K."/>
            <person name="Kawai Y."/>
            <person name="Isono Y."/>
            <person name="Nakamura Y."/>
            <person name="Nagahari K."/>
            <person name="Murakami K."/>
            <person name="Yasuda T."/>
            <person name="Iwayanagi T."/>
            <person name="Wagatsuma M."/>
            <person name="Shiratori A."/>
            <person name="Sudo H."/>
            <person name="Hosoiri T."/>
            <person name="Kaku Y."/>
            <person name="Kodaira H."/>
            <person name="Kondo H."/>
            <person name="Sugawara M."/>
            <person name="Takahashi M."/>
            <person name="Kanda K."/>
            <person name="Yokoi T."/>
            <person name="Furuya T."/>
            <person name="Kikkawa E."/>
            <person name="Omura Y."/>
            <person name="Abe K."/>
            <person name="Kamihara K."/>
            <person name="Katsuta N."/>
            <person name="Sato K."/>
            <person name="Tanikawa M."/>
            <person name="Yamazaki M."/>
            <person name="Ninomiya K."/>
            <person name="Ishibashi T."/>
            <person name="Yamashita H."/>
            <person name="Murakawa K."/>
            <person name="Fujimori K."/>
            <person name="Tanai H."/>
            <person name="Kimata M."/>
            <person name="Watanabe M."/>
            <person name="Hiraoka S."/>
            <person name="Chiba Y."/>
            <person name="Ishida S."/>
            <person name="Ono Y."/>
            <person name="Takiguchi S."/>
            <person name="Watanabe S."/>
            <person name="Yosida M."/>
            <person name="Hotuta T."/>
            <person name="Kusano J."/>
            <person name="Kanehori K."/>
            <person name="Takahashi-Fujii A."/>
            <person name="Hara H."/>
            <person name="Tanase T.-O."/>
            <person name="Nomura Y."/>
            <person name="Togiya S."/>
            <person name="Komai F."/>
            <person name="Hara R."/>
            <person name="Takeuchi K."/>
            <person name="Arita M."/>
            <person name="Imose N."/>
            <person name="Musashino K."/>
            <person name="Yuuki H."/>
            <person name="Oshima A."/>
            <person name="Sasaki N."/>
            <person name="Aotsuka S."/>
            <person name="Yoshikawa Y."/>
            <person name="Matsunawa H."/>
            <person name="Ichihara T."/>
            <person name="Shiohata N."/>
            <person name="Sano S."/>
            <person name="Moriya S."/>
            <person name="Momiyama H."/>
            <person name="Satoh N."/>
            <person name="Takami S."/>
            <person name="Terashima Y."/>
            <person name="Suzuki O."/>
            <person name="Nakagawa S."/>
            <person name="Senoh A."/>
            <person name="Mizoguchi H."/>
            <person name="Goto Y."/>
            <person name="Shimizu F."/>
            <person name="Wakebe H."/>
            <person name="Hishigaki H."/>
            <person name="Watanabe T."/>
            <person name="Sugiyama A."/>
            <person name="Takemoto M."/>
            <person name="Kawakami B."/>
            <person name="Yamazaki M."/>
            <person name="Watanabe K."/>
            <person name="Kumagai A."/>
            <person name="Itakura S."/>
            <person name="Fukuzumi Y."/>
            <person name="Fujimori Y."/>
            <person name="Komiyama M."/>
            <person name="Tashiro H."/>
            <person name="Tanigami A."/>
            <person name="Fujiwara T."/>
            <person name="Ono T."/>
            <person name="Yamada K."/>
            <person name="Fujii Y."/>
            <person name="Ozaki K."/>
            <person name="Hirao M."/>
            <person name="Ohmori Y."/>
            <person name="Kawabata A."/>
            <person name="Hikiji T."/>
            <person name="Kobatake N."/>
            <person name="Inagaki H."/>
            <person name="Ikema Y."/>
            <person name="Okamoto S."/>
            <person name="Okitani R."/>
            <person name="Kawakami T."/>
            <person name="Noguchi S."/>
            <person name="Itoh T."/>
            <person name="Shigeta K."/>
            <person name="Senba T."/>
            <person name="Matsumura K."/>
            <person name="Nakajima Y."/>
            <person name="Mizuno T."/>
            <person name="Morinaga M."/>
            <person name="Sasaki M."/>
            <person name="Togashi T."/>
            <person name="Oyama M."/>
            <person name="Hata H."/>
            <person name="Watanabe M."/>
            <person name="Komatsu T."/>
            <person name="Mizushima-Sugano J."/>
            <person name="Satoh T."/>
            <person name="Shirai Y."/>
            <person name="Takahashi Y."/>
            <person name="Nakagawa K."/>
            <person name="Okumura K."/>
            <person name="Nagase T."/>
            <person name="Nomura N."/>
            <person name="Kikuchi H."/>
            <person name="Masuho Y."/>
            <person name="Yamashita R."/>
            <person name="Nakai K."/>
            <person name="Yada T."/>
            <person name="Nakamura Y."/>
            <person name="Ohara O."/>
            <person name="Isogai T."/>
            <person name="Sugano S."/>
        </authorList>
    </citation>
    <scope>NUCLEOTIDE SEQUENCE [LARGE SCALE MRNA] (ISOFORMS 1; 2 AND 5)</scope>
    <source>
        <tissue>Lung</tissue>
        <tissue>Mammary gland</tissue>
        <tissue>Thalamus</tissue>
    </source>
</reference>
<reference key="6">
    <citation type="journal article" date="2006" name="Nature">
        <title>The finished DNA sequence of human chromosome 12.</title>
        <authorList>
            <person name="Scherer S.E."/>
            <person name="Muzny D.M."/>
            <person name="Buhay C.J."/>
            <person name="Chen R."/>
            <person name="Cree A."/>
            <person name="Ding Y."/>
            <person name="Dugan-Rocha S."/>
            <person name="Gill R."/>
            <person name="Gunaratne P."/>
            <person name="Harris R.A."/>
            <person name="Hawes A.C."/>
            <person name="Hernandez J."/>
            <person name="Hodgson A.V."/>
            <person name="Hume J."/>
            <person name="Jackson A."/>
            <person name="Khan Z.M."/>
            <person name="Kovar-Smith C."/>
            <person name="Lewis L.R."/>
            <person name="Lozado R.J."/>
            <person name="Metzker M.L."/>
            <person name="Milosavljevic A."/>
            <person name="Miner G.R."/>
            <person name="Montgomery K.T."/>
            <person name="Morgan M.B."/>
            <person name="Nazareth L.V."/>
            <person name="Scott G."/>
            <person name="Sodergren E."/>
            <person name="Song X.-Z."/>
            <person name="Steffen D."/>
            <person name="Lovering R.C."/>
            <person name="Wheeler D.A."/>
            <person name="Worley K.C."/>
            <person name="Yuan Y."/>
            <person name="Zhang Z."/>
            <person name="Adams C.Q."/>
            <person name="Ansari-Lari M.A."/>
            <person name="Ayele M."/>
            <person name="Brown M.J."/>
            <person name="Chen G."/>
            <person name="Chen Z."/>
            <person name="Clerc-Blankenburg K.P."/>
            <person name="Davis C."/>
            <person name="Delgado O."/>
            <person name="Dinh H.H."/>
            <person name="Draper H."/>
            <person name="Gonzalez-Garay M.L."/>
            <person name="Havlak P."/>
            <person name="Jackson L.R."/>
            <person name="Jacob L.S."/>
            <person name="Kelly S.H."/>
            <person name="Li L."/>
            <person name="Li Z."/>
            <person name="Liu J."/>
            <person name="Liu W."/>
            <person name="Lu J."/>
            <person name="Maheshwari M."/>
            <person name="Nguyen B.-V."/>
            <person name="Okwuonu G.O."/>
            <person name="Pasternak S."/>
            <person name="Perez L.M."/>
            <person name="Plopper F.J.H."/>
            <person name="Santibanez J."/>
            <person name="Shen H."/>
            <person name="Tabor P.E."/>
            <person name="Verduzco D."/>
            <person name="Waldron L."/>
            <person name="Wang Q."/>
            <person name="Williams G.A."/>
            <person name="Zhang J."/>
            <person name="Zhou J."/>
            <person name="Allen C.C."/>
            <person name="Amin A.G."/>
            <person name="Anyalebechi V."/>
            <person name="Bailey M."/>
            <person name="Barbaria J.A."/>
            <person name="Bimage K.E."/>
            <person name="Bryant N.P."/>
            <person name="Burch P.E."/>
            <person name="Burkett C.E."/>
            <person name="Burrell K.L."/>
            <person name="Calderon E."/>
            <person name="Cardenas V."/>
            <person name="Carter K."/>
            <person name="Casias K."/>
            <person name="Cavazos I."/>
            <person name="Cavazos S.R."/>
            <person name="Ceasar H."/>
            <person name="Chacko J."/>
            <person name="Chan S.N."/>
            <person name="Chavez D."/>
            <person name="Christopoulos C."/>
            <person name="Chu J."/>
            <person name="Cockrell R."/>
            <person name="Cox C.D."/>
            <person name="Dang M."/>
            <person name="Dathorne S.R."/>
            <person name="David R."/>
            <person name="Davis C.M."/>
            <person name="Davy-Carroll L."/>
            <person name="Deshazo D.R."/>
            <person name="Donlin J.E."/>
            <person name="D'Souza L."/>
            <person name="Eaves K.A."/>
            <person name="Egan A."/>
            <person name="Emery-Cohen A.J."/>
            <person name="Escotto M."/>
            <person name="Flagg N."/>
            <person name="Forbes L.D."/>
            <person name="Gabisi A.M."/>
            <person name="Garza M."/>
            <person name="Hamilton C."/>
            <person name="Henderson N."/>
            <person name="Hernandez O."/>
            <person name="Hines S."/>
            <person name="Hogues M.E."/>
            <person name="Huang M."/>
            <person name="Idlebird D.G."/>
            <person name="Johnson R."/>
            <person name="Jolivet A."/>
            <person name="Jones S."/>
            <person name="Kagan R."/>
            <person name="King L.M."/>
            <person name="Leal B."/>
            <person name="Lebow H."/>
            <person name="Lee S."/>
            <person name="LeVan J.M."/>
            <person name="Lewis L.C."/>
            <person name="London P."/>
            <person name="Lorensuhewa L.M."/>
            <person name="Loulseged H."/>
            <person name="Lovett D.A."/>
            <person name="Lucier A."/>
            <person name="Lucier R.L."/>
            <person name="Ma J."/>
            <person name="Madu R.C."/>
            <person name="Mapua P."/>
            <person name="Martindale A.D."/>
            <person name="Martinez E."/>
            <person name="Massey E."/>
            <person name="Mawhiney S."/>
            <person name="Meador M.G."/>
            <person name="Mendez S."/>
            <person name="Mercado C."/>
            <person name="Mercado I.C."/>
            <person name="Merritt C.E."/>
            <person name="Miner Z.L."/>
            <person name="Minja E."/>
            <person name="Mitchell T."/>
            <person name="Mohabbat F."/>
            <person name="Mohabbat K."/>
            <person name="Montgomery B."/>
            <person name="Moore N."/>
            <person name="Morris S."/>
            <person name="Munidasa M."/>
            <person name="Ngo R.N."/>
            <person name="Nguyen N.B."/>
            <person name="Nickerson E."/>
            <person name="Nwaokelemeh O.O."/>
            <person name="Nwokenkwo S."/>
            <person name="Obregon M."/>
            <person name="Oguh M."/>
            <person name="Oragunye N."/>
            <person name="Oviedo R.J."/>
            <person name="Parish B.J."/>
            <person name="Parker D.N."/>
            <person name="Parrish J."/>
            <person name="Parks K.L."/>
            <person name="Paul H.A."/>
            <person name="Payton B.A."/>
            <person name="Perez A."/>
            <person name="Perrin W."/>
            <person name="Pickens A."/>
            <person name="Primus E.L."/>
            <person name="Pu L.-L."/>
            <person name="Puazo M."/>
            <person name="Quiles M.M."/>
            <person name="Quiroz J.B."/>
            <person name="Rabata D."/>
            <person name="Reeves K."/>
            <person name="Ruiz S.J."/>
            <person name="Shao H."/>
            <person name="Sisson I."/>
            <person name="Sonaike T."/>
            <person name="Sorelle R.P."/>
            <person name="Sutton A.E."/>
            <person name="Svatek A.F."/>
            <person name="Svetz L.A."/>
            <person name="Tamerisa K.S."/>
            <person name="Taylor T.R."/>
            <person name="Teague B."/>
            <person name="Thomas N."/>
            <person name="Thorn R.D."/>
            <person name="Trejos Z.Y."/>
            <person name="Trevino B.K."/>
            <person name="Ukegbu O.N."/>
            <person name="Urban J.B."/>
            <person name="Vasquez L.I."/>
            <person name="Vera V.A."/>
            <person name="Villasana D.M."/>
            <person name="Wang L."/>
            <person name="Ward-Moore S."/>
            <person name="Warren J.T."/>
            <person name="Wei X."/>
            <person name="White F."/>
            <person name="Williamson A.L."/>
            <person name="Wleczyk R."/>
            <person name="Wooden H.S."/>
            <person name="Wooden S.H."/>
            <person name="Yen J."/>
            <person name="Yoon L."/>
            <person name="Yoon V."/>
            <person name="Zorrilla S.E."/>
            <person name="Nelson D."/>
            <person name="Kucherlapati R."/>
            <person name="Weinstock G."/>
            <person name="Gibbs R.A."/>
        </authorList>
    </citation>
    <scope>NUCLEOTIDE SEQUENCE [LARGE SCALE GENOMIC DNA]</scope>
</reference>
<reference key="7">
    <citation type="submission" date="2005-07" db="EMBL/GenBank/DDBJ databases">
        <authorList>
            <person name="Mural R.J."/>
            <person name="Istrail S."/>
            <person name="Sutton G.G."/>
            <person name="Florea L."/>
            <person name="Halpern A.L."/>
            <person name="Mobarry C.M."/>
            <person name="Lippert R."/>
            <person name="Walenz B."/>
            <person name="Shatkay H."/>
            <person name="Dew I."/>
            <person name="Miller J.R."/>
            <person name="Flanigan M.J."/>
            <person name="Edwards N.J."/>
            <person name="Bolanos R."/>
            <person name="Fasulo D."/>
            <person name="Halldorsson B.V."/>
            <person name="Hannenhalli S."/>
            <person name="Turner R."/>
            <person name="Yooseph S."/>
            <person name="Lu F."/>
            <person name="Nusskern D.R."/>
            <person name="Shue B.C."/>
            <person name="Zheng X.H."/>
            <person name="Zhong F."/>
            <person name="Delcher A.L."/>
            <person name="Huson D.H."/>
            <person name="Kravitz S.A."/>
            <person name="Mouchard L."/>
            <person name="Reinert K."/>
            <person name="Remington K.A."/>
            <person name="Clark A.G."/>
            <person name="Waterman M.S."/>
            <person name="Eichler E.E."/>
            <person name="Adams M.D."/>
            <person name="Hunkapiller M.W."/>
            <person name="Myers E.W."/>
            <person name="Venter J.C."/>
        </authorList>
    </citation>
    <scope>NUCLEOTIDE SEQUENCE [LARGE SCALE GENOMIC DNA]</scope>
</reference>
<reference key="8">
    <citation type="journal article" date="2004" name="Genome Res.">
        <title>The status, quality, and expansion of the NIH full-length cDNA project: the Mammalian Gene Collection (MGC).</title>
        <authorList>
            <consortium name="The MGC Project Team"/>
        </authorList>
    </citation>
    <scope>NUCLEOTIDE SEQUENCE [LARGE SCALE MRNA] (ISOFORM 1)</scope>
    <source>
        <tissue>B-cell</tissue>
        <tissue>Brain</tissue>
    </source>
</reference>
<reference key="9">
    <citation type="journal article" date="2000" name="Genomics">
        <title>Identification of two novel proteins that interact with germ-cell-specific RNA-binding proteins DAZ and DAZL1.</title>
        <authorList>
            <person name="Tsui S."/>
            <person name="Dai T."/>
            <person name="Roettger S."/>
            <person name="Schempp W."/>
            <person name="Salido E.C."/>
            <person name="Yen P.H."/>
        </authorList>
    </citation>
    <scope>TISSUE SPECIFICITY</scope>
    <scope>INTERACTION WITH DAZ1 AND DAZL</scope>
    <source>
        <tissue>Testis</tissue>
    </source>
</reference>
<reference key="10">
    <citation type="journal article" date="2001" name="J. Biol. Chem.">
        <title>Nuclear import/export of hRPF1/Nedd4 regulates the ubiquitin-dependent degradation of its nuclear substrates.</title>
        <authorList>
            <person name="Hamilton M.H."/>
            <person name="Tcherepanova I."/>
            <person name="Huibregtse J.M."/>
            <person name="McDonnell D.P."/>
        </authorList>
    </citation>
    <scope>INTERACTION WITH NEDD4</scope>
    <scope>SUBCELLULAR LOCATION</scope>
    <scope>UBIQUITINATION BY NEDD4</scope>
    <scope>PPAY MOTIF</scope>
    <scope>MUTAGENESIS OF 40-PRO--TYR-42</scope>
</reference>
<reference key="11">
    <citation type="journal article" date="2008" name="Mol. Cell. Biol.">
        <title>Proline-rich transcript in brain protein induces stress granule formation.</title>
        <authorList>
            <person name="Kim J.E."/>
            <person name="Ryu I."/>
            <person name="Kim W.J."/>
            <person name="Song O.K."/>
            <person name="Ryu J."/>
            <person name="Kwon M.Y."/>
            <person name="Kim J.H."/>
            <person name="Jang S.K."/>
        </authorList>
    </citation>
    <scope>FUNCTION</scope>
    <scope>INTERACTION WITH EIF4G1 AND EIF4G2</scope>
    <scope>SUBCELLULAR LOCATION</scope>
    <scope>INDUCTION</scope>
</reference>
<reference key="12">
    <citation type="journal article" date="2009" name="Nucleic Acids Res.">
        <title>Dazap2 modulates transcription driven by the Wnt effector TCF-4.</title>
        <authorList>
            <person name="Lukas J."/>
            <person name="Mazna P."/>
            <person name="Valenta T."/>
            <person name="Doubravska L."/>
            <person name="Pospichalova V."/>
            <person name="Vojtechova M."/>
            <person name="Fafilek B."/>
            <person name="Ivanek R."/>
            <person name="Plachy J."/>
            <person name="Novak J."/>
            <person name="Korinek V."/>
        </authorList>
    </citation>
    <scope>INTERACTION WITH TCF7; TCF7L1; TCF7L2 AND LEF1</scope>
    <scope>SUBCELLULAR LOCATION</scope>
</reference>
<reference key="13">
    <citation type="journal article" date="2011" name="Biochem. Genet.">
        <title>Evolutionary features and intracellular behavior of the PRTB protein.</title>
        <authorList>
            <person name="Matsunami M."/>
            <person name="Yoshioka T."/>
            <person name="Minoura T."/>
            <person name="Okano Y."/>
            <person name="Muto Y."/>
        </authorList>
    </citation>
    <scope>SUBCELLULAR LOCATION</scope>
    <scope>UBIQUITINATION</scope>
    <scope>MUTAGENESIS OF LYS-4 AND LYS-153</scope>
</reference>
<reference key="14">
    <citation type="journal article" date="2011" name="PLoS ONE">
        <title>The inhibitor of growth protein 5 (ING5) depends on INCA1 as a co-factor for its antiproliferative effects.</title>
        <authorList>
            <person name="Zhang F."/>
            <person name="Baeumer N."/>
            <person name="Rode M."/>
            <person name="Ji P."/>
            <person name="Zhang T."/>
            <person name="Berdel W.E."/>
            <person name="Mueller-Tidow C."/>
        </authorList>
    </citation>
    <scope>INTERACTION WITH INCA1</scope>
</reference>
<reference key="15">
    <citation type="journal article" date="2012" name="FEBS Lett.">
        <title>Characterizing the neurite outgrowth inhibitory effect of Mani.</title>
        <authorList>
            <person name="Mishra M."/>
            <person name="Lee S."/>
            <person name="Lin M.K."/>
            <person name="Yamashita T."/>
            <person name="Heese K."/>
        </authorList>
    </citation>
    <scope>INTERACTION WITH FAM168B</scope>
</reference>
<reference key="16">
    <citation type="journal article" date="2012" name="Immunobiology">
        <title>Smurf2 regulates IL17RB by proteasomal degradation of its novel binding partner DAZAP2.</title>
        <authorList>
            <person name="Popova A."/>
            <person name="Kzhyshkowska J."/>
            <person name="Nurgazieva D."/>
            <person name="Goerdt S."/>
            <person name="Gratchev A."/>
        </authorList>
    </citation>
    <scope>UBIQUITINATION BY SMURF2</scope>
    <scope>SUBCELLULAR LOCATION</scope>
    <scope>INTERACTION WITH IL17RB</scope>
</reference>
<reference key="17">
    <citation type="journal article" date="2021" name="Nucleic Acids Res.">
        <title>DAZAP2 acts as specifier of the p53 response to DNA damage.</title>
        <authorList>
            <person name="Liebl M.C."/>
            <person name="Moehlenbrink J."/>
            <person name="Becker H."/>
            <person name="Raddatz G."/>
            <person name="Abdeen S.K."/>
            <person name="Aqeilan R.I."/>
            <person name="Lyko F."/>
            <person name="Hofmann T.G."/>
        </authorList>
    </citation>
    <scope>FUNCTION</scope>
    <scope>INTERACTION WITH HIPK2; SIAH1 AND TP53</scope>
    <scope>SUBCELLULAR LOCATION</scope>
    <scope>PHOSPHORYLATION AT SER-77</scope>
    <scope>MUTAGENESIS OF SER-77</scope>
</reference>
<keyword id="KW-0025">Alternative splicing</keyword>
<keyword id="KW-0963">Cytoplasm</keyword>
<keyword id="KW-0539">Nucleus</keyword>
<keyword id="KW-0597">Phosphoprotein</keyword>
<keyword id="KW-1267">Proteomics identification</keyword>
<keyword id="KW-1185">Reference proteome</keyword>
<keyword id="KW-0832">Ubl conjugation</keyword>